<organism>
    <name type="scientific">Homo sapiens</name>
    <name type="common">Human</name>
    <dbReference type="NCBI Taxonomy" id="9606"/>
    <lineage>
        <taxon>Eukaryota</taxon>
        <taxon>Metazoa</taxon>
        <taxon>Chordata</taxon>
        <taxon>Craniata</taxon>
        <taxon>Vertebrata</taxon>
        <taxon>Euteleostomi</taxon>
        <taxon>Mammalia</taxon>
        <taxon>Eutheria</taxon>
        <taxon>Euarchontoglires</taxon>
        <taxon>Primates</taxon>
        <taxon>Haplorrhini</taxon>
        <taxon>Catarrhini</taxon>
        <taxon>Hominidae</taxon>
        <taxon>Homo</taxon>
    </lineage>
</organism>
<name>PP2AA_HUMAN</name>
<feature type="chain" id="PRO_0000058839" description="Serine/threonine-protein phosphatase 2A catalytic subunit alpha isoform">
    <location>
        <begin position="1"/>
        <end position="309"/>
    </location>
</feature>
<feature type="active site" description="Proton donor" evidence="1">
    <location>
        <position position="118"/>
    </location>
</feature>
<feature type="binding site" evidence="10 30 31 33 45 46 47">
    <location>
        <position position="57"/>
    </location>
    <ligand>
        <name>Mn(2+)</name>
        <dbReference type="ChEBI" id="CHEBI:29035"/>
        <label>1</label>
    </ligand>
</feature>
<feature type="binding site" evidence="37 52 53">
    <location>
        <position position="57"/>
    </location>
    <ligand>
        <name>Zn(2+)</name>
        <dbReference type="ChEBI" id="CHEBI:29105"/>
    </ligand>
</feature>
<feature type="binding site" evidence="10 30 31 33 45 46 47">
    <location>
        <position position="59"/>
    </location>
    <ligand>
        <name>Mn(2+)</name>
        <dbReference type="ChEBI" id="CHEBI:29035"/>
        <label>1</label>
    </ligand>
</feature>
<feature type="binding site" evidence="37 52 53">
    <location>
        <position position="59"/>
    </location>
    <ligand>
        <name>Zn(2+)</name>
        <dbReference type="ChEBI" id="CHEBI:29105"/>
    </ligand>
</feature>
<feature type="binding site" evidence="37 52 53">
    <location>
        <position position="85"/>
    </location>
    <ligand>
        <name>Fe(3+)</name>
        <dbReference type="ChEBI" id="CHEBI:29034"/>
    </ligand>
</feature>
<feature type="binding site" evidence="10 30 31 33 45 46 47">
    <location>
        <position position="85"/>
    </location>
    <ligand>
        <name>Mn(2+)</name>
        <dbReference type="ChEBI" id="CHEBI:29035"/>
        <label>1</label>
    </ligand>
</feature>
<feature type="binding site" evidence="10 30 31 33 45 46 47">
    <location>
        <position position="85"/>
    </location>
    <ligand>
        <name>Mn(2+)</name>
        <dbReference type="ChEBI" id="CHEBI:29035"/>
        <label>2</label>
    </ligand>
</feature>
<feature type="binding site" evidence="37 52 53">
    <location>
        <position position="85"/>
    </location>
    <ligand>
        <name>Zn(2+)</name>
        <dbReference type="ChEBI" id="CHEBI:29105"/>
    </ligand>
</feature>
<feature type="binding site" evidence="37 52 53">
    <location>
        <position position="117"/>
    </location>
    <ligand>
        <name>Fe(3+)</name>
        <dbReference type="ChEBI" id="CHEBI:29034"/>
    </ligand>
</feature>
<feature type="binding site" evidence="10 30 31 33 45 46 47">
    <location>
        <position position="117"/>
    </location>
    <ligand>
        <name>Mn(2+)</name>
        <dbReference type="ChEBI" id="CHEBI:29035"/>
        <label>2</label>
    </ligand>
</feature>
<feature type="binding site" evidence="37 52 53">
    <location>
        <position position="167"/>
    </location>
    <ligand>
        <name>Fe(3+)</name>
        <dbReference type="ChEBI" id="CHEBI:29034"/>
    </ligand>
</feature>
<feature type="binding site" evidence="10 30 31 33 45 46 47">
    <location>
        <position position="167"/>
    </location>
    <ligand>
        <name>Mn(2+)</name>
        <dbReference type="ChEBI" id="CHEBI:29035"/>
        <label>2</label>
    </ligand>
</feature>
<feature type="binding site" evidence="37 52 53">
    <location>
        <position position="241"/>
    </location>
    <ligand>
        <name>Fe(3+)</name>
        <dbReference type="ChEBI" id="CHEBI:29034"/>
    </ligand>
</feature>
<feature type="binding site" evidence="10 30 31 33 45 46 47">
    <location>
        <position position="241"/>
    </location>
    <ligand>
        <name>Mn(2+)</name>
        <dbReference type="ChEBI" id="CHEBI:29035"/>
        <label>2</label>
    </ligand>
</feature>
<feature type="modified residue" description="Phosphotyrosine" evidence="3">
    <location>
        <position position="307"/>
    </location>
</feature>
<feature type="modified residue" description="Leucine methyl ester" evidence="37 40 52 53">
    <location>
        <position position="309"/>
    </location>
</feature>
<feature type="splice variant" id="VSP_044320" description="In isoform 2." evidence="43">
    <location>
        <begin position="193"/>
        <end position="246"/>
    </location>
</feature>
<feature type="sequence variant" id="VAR_051735" description="In dbSNP:rs11552681.">
    <original>V</original>
    <variation>A</variation>
    <location>
        <position position="52"/>
    </location>
</feature>
<feature type="sequence variant" id="VAR_082064" description="In HJS3; uncertain significance; dbSNP:rs1580641099." evidence="27">
    <original>G</original>
    <variation>V</variation>
    <location>
        <position position="60"/>
    </location>
</feature>
<feature type="sequence variant" id="VAR_082065" description="In HJS3; loss of phosphatase activity in an in vitro assay; strong decrease in C-terminal methylation; decreased interaction with PP2A subunit A PPP2R1A/PPP2R1B; loss of interaction with PP2A subunit B component PPP2R2A; decreased interaction with PP2A subunit B components PPP2R5A, PPP2R5B, PPP2R5E, PPP2R3A and STRN3; dbSNP:rs1561737008." evidence="27">
    <original>D</original>
    <variation>G</variation>
    <location>
        <position position="88"/>
    </location>
</feature>
<feature type="sequence variant" id="VAR_082066" description="In HJS3; decreased phosphatase activity in an in vitro assay; no effect on the interaction with PP2A subunit A PPP2R1A/PPP2R1B; increased interaction with PP2A subunit B component STRN3; no effect on interaction with other PP2A subunit B components; dbSNP:rs764595667." evidence="27">
    <original>Q</original>
    <variation>H</variation>
    <location>
        <position position="122"/>
    </location>
</feature>
<feature type="sequence variant" id="VAR_082067" description="In HJS3; may be expressed at very low levels, if any." evidence="27">
    <location>
        <begin position="125"/>
        <end position="309"/>
    </location>
</feature>
<feature type="sequence variant" id="VAR_082068" description="In HJS3; almost complete loss of phosphatase activity in an in vitro assay; strong decrease in C-terminal methylation; no effect on the interaction with PP2A subunit A PPP2R1A/PPP2R1B; decreased interaction with PP2A subunit B components PPP2R5A, PPP2R5B, PPP2R5C, PPP2R5D, PPP2R5E and PPP2R3A; no effect on interaction with PP2A subunit B component PPP2R2A; dbSNP:rs1580637688." evidence="27">
    <original>Y</original>
    <variation>C</variation>
    <location>
        <position position="127"/>
    </location>
</feature>
<feature type="sequence variant" id="VAR_082069" description="In HJS3; increased phosphatase activity in an in vitro assay; no effect on C-terminal methylation; decreased interaction with PP2A subunit A PPP2R1A/PPP2R1B; loss of interaction with PP2A subunit B components PPP2R5A, PPP2R5B, PPP2R5C, PPP2R5D and PPP2R5E; no effect on interaction with PP2A subunit B components PPP2R2A and PPP2R3A; dbSNP:rs1580637673." evidence="27">
    <original>D</original>
    <variation>H</variation>
    <location>
        <position position="131"/>
    </location>
</feature>
<feature type="sequence variant" id="VAR_082070" description="In HJS3; decreased phosphatase activity in an in vitro assay; no effect on the interaction with PP2A subunit A PPP2R1A/PPP2R1B; decreased interaction with PP2A subunit B component PPP2R5D; increased interaction with PP2A subunit B component STRN3; no effect on interaction with other PP2A subunit B components; dbSNP:rs915349596." evidence="27">
    <original>H</original>
    <variation>R</variation>
    <location>
        <position position="191"/>
    </location>
</feature>
<feature type="sequence variant" id="VAR_082071" description="In HJS3; loss of phosphatase activity in an in vitro assay; complete loss of interaction with PP2A subunit A PPP2R1A/PPP2R1B; interacts with alpha4/IGBP1; loss of interaction with PP2A subunit B components; dbSNP:rs148071386." evidence="27">
    <location>
        <begin position="214"/>
        <end position="309"/>
    </location>
</feature>
<feature type="sequence variant" id="VAR_082072" description="In HJS3; decreased phosphatase activity in an in vitro assay; no effect on C-terminal methylation; no effect on the interaction with PP2A subunit A PPP2R1A/PPP2R1B; no effect on interaction with PP2A subunit B components; dbSNP:rs1580636668." evidence="27">
    <original>D</original>
    <variation>H</variation>
    <location>
        <position position="223"/>
    </location>
</feature>
<feature type="sequence variant" id="VAR_082073" description="In HJS3; no effect on phosphatase activity in an in vitro assay; no effect on the interaction with PP2A subunit A PPP2R1A/PPP2R1B; no effect on interaction with PP2A subunit B components; dbSNP:rs1580636665." evidence="27">
    <original>D</original>
    <variation>V</variation>
    <location>
        <position position="223"/>
    </location>
</feature>
<feature type="sequence variant" id="VAR_082074" description="In HJS3; severe decrease in phosphatase activity in an in vitro assay; strong decrease in C-terminal methylation; decreased interaction with PP2A subunit A PPP2R1A/PPP2R1B; loss of interaction with PP2A subunit B components PPP2R2A, PPP2R5A, PPP2R5B, PPP2R5E, PPP2R3A and STRN3; decreased interaction with PP2A subunit B components PPP2R5C and PPP2R5D; dbSNP:rs1561733474." evidence="27">
    <original>Y</original>
    <variation>C</variation>
    <location>
        <position position="265"/>
    </location>
</feature>
<feature type="sequence variant" id="VAR_082075" description="In HJS3; almost complete loss of phosphatase activity in an in vitro assay; decreased interaction with PP2A subunit A PPP2R1A/PPP2R1B; strongly decreased interaction with PP2A subunit B components PPP2R2A and PPP2R3A; increased interaction with PP2A subunit B component STRN3; no effect on interaction with PP2A subunit B components PPP2R5A, PPP2R5B, PPP2R5C, PPP2R5D and PPP2R5E." evidence="27">
    <original>F</original>
    <variation>FF</variation>
    <location>
        <position position="308"/>
    </location>
</feature>
<feature type="mutagenesis site" description="Loss of phosphatase activity." evidence="27">
    <original>D</original>
    <variation>N</variation>
    <location>
        <position position="85"/>
    </location>
</feature>
<feature type="mutagenesis site" description="Loss of binding to PP2A B-alpha regulatory subunit." evidence="4">
    <original>L</original>
    <variation>A</variation>
    <location>
        <position position="309"/>
    </location>
</feature>
<feature type="helix" evidence="56">
    <location>
        <begin position="3"/>
        <end position="18"/>
    </location>
</feature>
<feature type="helix" evidence="56">
    <location>
        <begin position="25"/>
        <end position="39"/>
    </location>
</feature>
<feature type="strand" evidence="56">
    <location>
        <begin position="44"/>
        <end position="48"/>
    </location>
</feature>
<feature type="strand" evidence="56">
    <location>
        <begin position="50"/>
        <end position="55"/>
    </location>
</feature>
<feature type="helix" evidence="56">
    <location>
        <begin position="62"/>
        <end position="72"/>
    </location>
</feature>
<feature type="turn" evidence="56">
    <location>
        <begin position="75"/>
        <end position="77"/>
    </location>
</feature>
<feature type="strand" evidence="56">
    <location>
        <begin position="80"/>
        <end position="82"/>
    </location>
</feature>
<feature type="strand" evidence="56">
    <location>
        <begin position="87"/>
        <end position="91"/>
    </location>
</feature>
<feature type="helix" evidence="56">
    <location>
        <begin position="93"/>
        <end position="106"/>
    </location>
</feature>
<feature type="turn" evidence="56">
    <location>
        <begin position="108"/>
        <end position="110"/>
    </location>
</feature>
<feature type="strand" evidence="56">
    <location>
        <begin position="111"/>
        <end position="113"/>
    </location>
</feature>
<feature type="helix" evidence="57">
    <location>
        <begin position="117"/>
        <end position="119"/>
    </location>
</feature>
<feature type="helix" evidence="56">
    <location>
        <begin position="121"/>
        <end position="127"/>
    </location>
</feature>
<feature type="helix" evidence="56">
    <location>
        <begin position="129"/>
        <end position="137"/>
    </location>
</feature>
<feature type="strand" evidence="56">
    <location>
        <begin position="138"/>
        <end position="140"/>
    </location>
</feature>
<feature type="helix" evidence="56">
    <location>
        <begin position="141"/>
        <end position="150"/>
    </location>
</feature>
<feature type="strand" evidence="56">
    <location>
        <begin position="155"/>
        <end position="159"/>
    </location>
</feature>
<feature type="turn" evidence="56">
    <location>
        <begin position="160"/>
        <end position="162"/>
    </location>
</feature>
<feature type="strand" evidence="56">
    <location>
        <begin position="163"/>
        <end position="168"/>
    </location>
</feature>
<feature type="helix" evidence="56">
    <location>
        <begin position="177"/>
        <end position="182"/>
    </location>
</feature>
<feature type="strand" evidence="59">
    <location>
        <begin position="186"/>
        <end position="188"/>
    </location>
</feature>
<feature type="strand" evidence="56">
    <location>
        <begin position="191"/>
        <end position="193"/>
    </location>
</feature>
<feature type="helix" evidence="56">
    <location>
        <begin position="194"/>
        <end position="200"/>
    </location>
</feature>
<feature type="strand" evidence="56">
    <location>
        <begin position="205"/>
        <end position="211"/>
    </location>
</feature>
<feature type="strand" evidence="56">
    <location>
        <begin position="215"/>
        <end position="220"/>
    </location>
</feature>
<feature type="helix" evidence="56">
    <location>
        <begin position="222"/>
        <end position="232"/>
    </location>
</feature>
<feature type="strand" evidence="56">
    <location>
        <begin position="235"/>
        <end position="239"/>
    </location>
</feature>
<feature type="strand" evidence="56">
    <location>
        <begin position="247"/>
        <end position="251"/>
    </location>
</feature>
<feature type="turn" evidence="56">
    <location>
        <begin position="252"/>
        <end position="255"/>
    </location>
</feature>
<feature type="strand" evidence="56">
    <location>
        <begin position="256"/>
        <end position="259"/>
    </location>
</feature>
<feature type="helix" evidence="56">
    <location>
        <begin position="265"/>
        <end position="267"/>
    </location>
</feature>
<feature type="strand" evidence="56">
    <location>
        <begin position="273"/>
        <end position="278"/>
    </location>
</feature>
<feature type="strand" evidence="56">
    <location>
        <begin position="284"/>
        <end position="289"/>
    </location>
</feature>
<feature type="strand" evidence="58">
    <location>
        <begin position="300"/>
        <end position="303"/>
    </location>
</feature>
<feature type="turn" evidence="58">
    <location>
        <begin position="306"/>
        <end position="308"/>
    </location>
</feature>
<keyword id="KW-0002">3D-structure</keyword>
<keyword id="KW-0025">Alternative splicing</keyword>
<keyword id="KW-0137">Centromere</keyword>
<keyword id="KW-0158">Chromosome</keyword>
<keyword id="KW-0963">Cytoplasm</keyword>
<keyword id="KW-0206">Cytoskeleton</keyword>
<keyword id="KW-0903">Direct protein sequencing</keyword>
<keyword id="KW-0225">Disease variant</keyword>
<keyword id="KW-0378">Hydrolase</keyword>
<keyword id="KW-0991">Intellectual disability</keyword>
<keyword id="KW-0408">Iron</keyword>
<keyword id="KW-0464">Manganese</keyword>
<keyword id="KW-0469">Meiosis</keyword>
<keyword id="KW-0479">Metal-binding</keyword>
<keyword id="KW-0488">Methylation</keyword>
<keyword id="KW-0539">Nucleus</keyword>
<keyword id="KW-0597">Phosphoprotein</keyword>
<keyword id="KW-0904">Protein phosphatase</keyword>
<keyword id="KW-1267">Proteomics identification</keyword>
<keyword id="KW-1185">Reference proteome</keyword>
<keyword id="KW-0832">Ubl conjugation</keyword>
<keyword id="KW-0862">Zinc</keyword>
<protein>
    <recommendedName>
        <fullName>Serine/threonine-protein phosphatase 2A catalytic subunit alpha isoform</fullName>
        <shortName>PP2A-alpha</shortName>
        <ecNumber evidence="15 27 28 30">3.1.3.16</ecNumber>
    </recommendedName>
    <alternativeName>
        <fullName>Replication protein C</fullName>
        <shortName>RP-C</shortName>
    </alternativeName>
</protein>
<comment type="function">
    <text evidence="2 5 6 11 19 21 26 29 30 31 32 35 42">Catalytic subunit of protein phosphatase 2A (PP2A), a serine/threonine phosphatase involved in the regulation of a wide variety of enzymes, signal transduction pathways, and cellular events (PubMed:10801873, PubMed:12473674, PubMed:17245430, PubMed:22613722, PubMed:33243860, PubMed:34004147, PubMed:9920888). PP2A is the major phosphatase for microtubule-associated proteins (MAPs) (PubMed:22613722). PP2A can modulate the activity of phosphorylase B kinase casein kinase 2, mitogen-stimulated S6 kinase, and MAP-2 kinase (PubMed:22613722). Cooperates with SGO2 to protect centromeric cohesin from separase-mediated cleavage in oocytes specifically during meiosis I (By similarity). Can dephosphorylate various proteins, such as SV40 large T antigen, AXIN1, p53/TP53, PIM3, WEE1 (PubMed:10801873, PubMed:12473674, PubMed:17245430, PubMed:9920888). Activates RAF1 by dephosphorylating it at 'Ser-259' (PubMed:10801873). Mediates dephosphorylation of WEE1, preventing its ubiquitin-mediated proteolysis, increasing WEE1 protein levels, and promoting the G2/M checkpoint (PubMed:33108758). Mediates dephosphorylation of MYC; promoting its ubiquitin-mediated proteolysis: interaction with AMBRA1 enhances interaction between PPP2CA and MYC (PubMed:25438055). Mediates dephosphorylation of FOXO3; promoting its stabilization: interaction with AMBRA1 enhances interaction between PPP2CA and FOXO3 (PubMed:30513302). Catalyzes dephosphorylation of the pyrin domain of NLRP3, promoting assembly of the NLRP3 inflammasome (By similarity). Together with RACK1 adapter, mediates dephosphorylation of AKT1 at 'Ser-473', preventing AKT1 activation and AKT-mTOR signaling pathway (By similarity). Dephosphorylation of AKT1 is essential for regulatory T-cells (Treg) homeostasis and stability (By similarity). Catalyzes dephosphorylation of PIM3, promotinh PIM3 ubiquitination and proteasomal degradation (PubMed:12473674). Part of the striatin-interacting phosphatase and kinase (STRIPAK) complexes (PubMed:33633399). STRIPAK complexes have critical roles in protein (de)phosphorylation and are regulators of multiple signaling pathways including Hippo, MAPK, nuclear receptor and cytoskeleton remodeling (PubMed:33633399). Different types of STRIPAK complexes are involved in a variety of biological processes such as cell growth, differentiation, apoptosis, metabolism and immune regulation (PubMed:33633399). Key mediator of a quality checkpoint during transcription elongation as part of the Integrator-PP2A (INTAC) complex (PubMed:33243860, PubMed:34004147, PubMed:37080207). The INTAC complex drives premature transcription termination of transcripts that are unfavorably configured for transcriptional elongation: within the INTAC complex, PPP2CA catalyzes dephosphorylation of the C-terminal domain (CTD) of Pol II subunit POLR2A/RPB1 and SUPT5H/SPT5, thereby preventing transcriptional elongation (PubMed:33243860, PubMed:34004147, PubMed:37080207).</text>
</comment>
<comment type="catalytic activity">
    <reaction evidence="15 30 32">
        <text>O-phospho-L-seryl-[protein] + H2O = L-seryl-[protein] + phosphate</text>
        <dbReference type="Rhea" id="RHEA:20629"/>
        <dbReference type="Rhea" id="RHEA-COMP:9863"/>
        <dbReference type="Rhea" id="RHEA-COMP:11604"/>
        <dbReference type="ChEBI" id="CHEBI:15377"/>
        <dbReference type="ChEBI" id="CHEBI:29999"/>
        <dbReference type="ChEBI" id="CHEBI:43474"/>
        <dbReference type="ChEBI" id="CHEBI:83421"/>
        <dbReference type="EC" id="3.1.3.16"/>
    </reaction>
</comment>
<comment type="catalytic activity">
    <reaction evidence="27 28 30 32">
        <text>O-phospho-L-threonyl-[protein] + H2O = L-threonyl-[protein] + phosphate</text>
        <dbReference type="Rhea" id="RHEA:47004"/>
        <dbReference type="Rhea" id="RHEA-COMP:11060"/>
        <dbReference type="Rhea" id="RHEA-COMP:11605"/>
        <dbReference type="ChEBI" id="CHEBI:15377"/>
        <dbReference type="ChEBI" id="CHEBI:30013"/>
        <dbReference type="ChEBI" id="CHEBI:43474"/>
        <dbReference type="ChEBI" id="CHEBI:61977"/>
        <dbReference type="EC" id="3.1.3.16"/>
    </reaction>
</comment>
<comment type="cofactor">
    <cofactor evidence="10 30 33">
        <name>Mn(2+)</name>
        <dbReference type="ChEBI" id="CHEBI:29035"/>
    </cofactor>
    <cofactor evidence="37">
        <name>Fe(3+)</name>
        <dbReference type="ChEBI" id="CHEBI:29034"/>
    </cofactor>
    <cofactor evidence="37">
        <name>Zn(2+)</name>
        <dbReference type="ChEBI" id="CHEBI:29105"/>
    </cofactor>
    <text evidence="10 37">Binds 2 metal ions per subunit. Can be two manganese ions, or one iron ion and one zinc ion.</text>
</comment>
<comment type="activity regulation">
    <text evidence="37">Inhibited by the interaction between PPP2R2A and ARPP19; this inhibition is enhanced when ARPP19 is phosphorylated (PubMed:38123684). Inhibited by the interaction between PPP2R2A and PABIR1/FAM122A (PubMed:38123684).</text>
</comment>
<comment type="subunit">
    <text evidence="2 5 7 8 9 10 12 13 14 16 17 18 20 21 22 23 24 25 26 27 28 30 31 32 33 34 35 36 37 38 41">PP2A consists of a common heterodimeric core enzyme composed of PPP2CA, a 36 kDa catalytic subunit (subunit C), and PPP2R1A, a 65 kDa constant regulatory subunit (PR65 or subunit A), that associates with a variety of regulatory subunits (PubMed:17055435, PubMed:18394995, PubMed:30595372, PubMed:38123684). Proteins that associate with the core dimer include three families of regulatory subunits B (the R2/B/PR55/B55, R3/B''/PR72/PR130/PR59 and R5/B'/B56 families), the 48 kDa variable regulatory subunit, viral proteins, and cell signaling molecules (PubMed:18394995, PubMed:30595372, PubMed:38123684). Interacts with the PP2A A subunit PPP2R1A (PubMed:37761890, PubMed:38123684). Interacts with the regulatory subunit PPP2R2A (PubMed:38123684). Interacts (via C-terminus) with PTPA (PubMed:25003389). Interacts with NXN; the interaction is direct (By similarity). Interacts with KCTD20 (By similarity). Interacts with BTBD10 (By similarity). Interacts with SGO1 and SGO2 (PubMed:16541025, PubMed:16580887, PubMed:17485487). Interacts with RAF1 (PubMed:10801873). Interaction with IGBP1 protects unassembled PPP2CA from degradative ubiquitination (PubMed:19818709, PubMed:20092282, PubMed:9647778). Interacts with GSK3B (via C2 domain) (PubMed:20080667). Interacts with MFHAS1; retains PPP2CA into the cytoplasm and excludes it from the nucleus (PubMed:28609714). Interacts with PABIR1/FAM122A (PubMed:27588481, PubMed:38123684). Interacts with ADCY8; interaction is phosphatase activity-dependent; antagonizes interaction between ADCY8 and calmodulin (PubMed:16258073). Interacts with CRTC3 (when phosphorylated at 'Ser-391') (PubMed:30611118). Interacts with SPRY2; the interaction is inhibited by TESK1 interaction with SPRY2, possibly by vesicular sequestration of SPRY2 (PubMed:17974561). Interacts with TRAF3IP3 (PubMed:30115741). Interacts with AMBRA1 (via PxP motifs); enhancing interaction between PPP2CA and MYC or FOXO3 (PubMed:25438055, PubMed:30513302). Forms a complex with AMBRA1 and BECN1; AMBRA1 and BECN1 components of the complex regulate MYC stability via different pathways (PubMed:25803737). Part of the core of STRIPAK complexes composed of PP2A catalytic and scaffolding subunits, the striatins (PP2A regulatory subunits), the striatin-associated proteins MOB4, STRIP1 and STRIP2, PDCD10 and members of the STE20 kinases, such as STK24 and STK26 (PubMed:33633399). Phosphatase component of the Integrator-PP2A (INTAC) complex, composed of the Integrator core complex and protein phosphatase 2A subunits PPP2CA and PPP2R1A (PubMed:33243860, PubMed:34004147, PubMed:37080207, PubMed:34762484, PubMed:36869814, PubMed:38570683).</text>
</comment>
<comment type="interaction">
    <interactant intactId="EBI-712311">
        <id>P67775</id>
    </interactant>
    <interactant intactId="EBI-296087">
        <id>P31749</id>
        <label>AKT1</label>
    </interactant>
    <organismsDiffer>false</organismsDiffer>
    <experiments>4</experiments>
</comment>
<comment type="interaction">
    <interactant intactId="EBI-712311">
        <id>P67775</id>
    </interactant>
    <interactant intactId="EBI-359234">
        <id>P39687</id>
        <label>ANP32A</label>
    </interactant>
    <organismsDiffer>false</organismsDiffer>
    <experiments>2</experiments>
</comment>
<comment type="interaction">
    <interactant intactId="EBI-712311">
        <id>P67775</id>
    </interactant>
    <interactant intactId="EBI-77613">
        <id>P05067</id>
        <label>APP</label>
    </interactant>
    <organismsDiffer>false</organismsDiffer>
    <experiments>3</experiments>
</comment>
<comment type="interaction">
    <interactant intactId="EBI-712311">
        <id>P67775</id>
    </interactant>
    <interactant intactId="EBI-18036948">
        <id>Q3SXR2</id>
        <label>C3orf36</label>
    </interactant>
    <organismsDiffer>false</organismsDiffer>
    <experiments>3</experiments>
</comment>
<comment type="interaction">
    <interactant intactId="EBI-712311">
        <id>P67775</id>
    </interactant>
    <interactant intactId="EBI-1056029">
        <id>Q16740</id>
        <label>CLPP</label>
    </interactant>
    <organismsDiffer>false</organismsDiffer>
    <experiments>3</experiments>
</comment>
<comment type="interaction">
    <interactant intactId="EBI-712311">
        <id>P67775</id>
    </interactant>
    <interactant intactId="EBI-73440">
        <id>P06730</id>
        <label>EIF4E</label>
    </interactant>
    <organismsDiffer>false</organismsDiffer>
    <experiments>2</experiments>
</comment>
<comment type="interaction">
    <interactant intactId="EBI-712311">
        <id>P67775</id>
    </interactant>
    <interactant intactId="EBI-1748945">
        <id>P46695</id>
        <label>IER3</label>
    </interactant>
    <organismsDiffer>false</organismsDiffer>
    <experiments>2</experiments>
</comment>
<comment type="interaction">
    <interactant intactId="EBI-712311">
        <id>P67775</id>
    </interactant>
    <interactant intactId="EBI-1055954">
        <id>P78318</id>
        <label>IGBP1</label>
    </interactant>
    <organismsDiffer>false</organismsDiffer>
    <experiments>20</experiments>
</comment>
<comment type="interaction">
    <interactant intactId="EBI-712311">
        <id>P67775</id>
    </interactant>
    <interactant intactId="EBI-81266">
        <id>O14920</id>
        <label>IKBKB</label>
    </interactant>
    <organismsDiffer>false</organismsDiffer>
    <experiments>3</experiments>
</comment>
<comment type="interaction">
    <interactant intactId="EBI-712311">
        <id>P67775</id>
    </interactant>
    <interactant intactId="EBI-81279">
        <id>Q9Y6K9</id>
        <label>IKBKG</label>
    </interactant>
    <organismsDiffer>false</organismsDiffer>
    <experiments>4</experiments>
</comment>
<comment type="interaction">
    <interactant intactId="EBI-712311">
        <id>P67775</id>
    </interactant>
    <interactant intactId="EBI-2650369">
        <id>Q14653</id>
        <label>IRF3</label>
    </interactant>
    <organismsDiffer>false</organismsDiffer>
    <experiments>4</experiments>
</comment>
<comment type="interaction">
    <interactant intactId="EBI-712311">
        <id>P67775</id>
    </interactant>
    <interactant intactId="EBI-8481408">
        <id>Q969F8</id>
        <label>KISS1R</label>
    </interactant>
    <organismsDiffer>false</organismsDiffer>
    <experiments>3</experiments>
</comment>
<comment type="interaction">
    <interactant intactId="EBI-712311">
        <id>P67775</id>
    </interactant>
    <interactant intactId="EBI-11985629">
        <id>Q96JM7-2</id>
        <label>L3MBTL3</label>
    </interactant>
    <organismsDiffer>false</organismsDiffer>
    <experiments>3</experiments>
</comment>
<comment type="interaction">
    <interactant intactId="EBI-712311">
        <id>P67775</id>
    </interactant>
    <interactant intactId="EBI-302388">
        <id>P30153</id>
        <label>PPP2R1A</label>
    </interactant>
    <organismsDiffer>false</organismsDiffer>
    <experiments>50</experiments>
</comment>
<comment type="interaction">
    <interactant intactId="EBI-712311">
        <id>P67775</id>
    </interactant>
    <interactant intactId="EBI-357094">
        <id>P30154</id>
        <label>PPP2R1B</label>
    </interactant>
    <organismsDiffer>false</organismsDiffer>
    <experiments>9</experiments>
</comment>
<comment type="interaction">
    <interactant intactId="EBI-712311">
        <id>P67775</id>
    </interactant>
    <interactant intactId="EBI-1774058">
        <id>Q9Y2T4</id>
        <label>PPP2R2C</label>
    </interactant>
    <organismsDiffer>false</organismsDiffer>
    <experiments>6</experiments>
</comment>
<comment type="interaction">
    <interactant intactId="EBI-712311">
        <id>P67775</id>
    </interactant>
    <interactant intactId="EBI-641666">
        <id>Q15172</id>
        <label>PPP2R5A</label>
    </interactant>
    <organismsDiffer>false</organismsDiffer>
    <experiments>8</experiments>
</comment>
<comment type="interaction">
    <interactant intactId="EBI-712311">
        <id>P67775</id>
    </interactant>
    <interactant intactId="EBI-1369497">
        <id>Q15173</id>
        <label>PPP2R5B</label>
    </interactant>
    <organismsDiffer>false</organismsDiffer>
    <experiments>8</experiments>
</comment>
<comment type="interaction">
    <interactant intactId="EBI-712311">
        <id>P67775</id>
    </interactant>
    <interactant intactId="EBI-1266156">
        <id>Q13362</id>
        <label>PPP2R5C</label>
    </interactant>
    <organismsDiffer>false</organismsDiffer>
    <experiments>11</experiments>
</comment>
<comment type="interaction">
    <interactant intactId="EBI-712311">
        <id>P67775</id>
    </interactant>
    <interactant intactId="EBI-365996">
        <id>P04049</id>
        <label>RAF1</label>
    </interactant>
    <organismsDiffer>false</organismsDiffer>
    <experiments>2</experiments>
</comment>
<comment type="interaction">
    <interactant intactId="EBI-712311">
        <id>P67775</id>
    </interactant>
    <interactant intactId="EBI-971402">
        <id>P28749</id>
        <label>RBL1</label>
    </interactant>
    <organismsDiffer>false</organismsDiffer>
    <experiments>2</experiments>
</comment>
<comment type="interaction">
    <interactant intactId="EBI-712311">
        <id>P67775</id>
    </interactant>
    <interactant intactId="EBI-971439">
        <id>Q08999</id>
        <label>RBL2</label>
    </interactant>
    <organismsDiffer>false</organismsDiffer>
    <experiments>2</experiments>
</comment>
<comment type="interaction">
    <interactant intactId="EBI-712311">
        <id>P67775</id>
    </interactant>
    <interactant intactId="EBI-73886">
        <id>Q04206</id>
        <label>RELA</label>
    </interactant>
    <organismsDiffer>false</organismsDiffer>
    <experiments>6</experiments>
</comment>
<comment type="interaction">
    <interactant intactId="EBI-712311">
        <id>P67775</id>
    </interactant>
    <interactant intactId="EBI-989069">
        <id>Q5FBB7</id>
        <label>SGO1</label>
    </interactant>
    <organismsDiffer>false</organismsDiffer>
    <experiments>7</experiments>
</comment>
<comment type="interaction">
    <interactant intactId="EBI-712311">
        <id>P67775</id>
    </interactant>
    <interactant intactId="EBI-989213">
        <id>Q562F6</id>
        <label>SGO2</label>
    </interactant>
    <organismsDiffer>false</organismsDiffer>
    <experiments>2</experiments>
</comment>
<comment type="interaction">
    <interactant intactId="EBI-712311">
        <id>P67775</id>
    </interactant>
    <interactant intactId="EBI-1773588">
        <id>Q5VSL9</id>
        <label>STRIP1</label>
    </interactant>
    <organismsDiffer>false</organismsDiffer>
    <experiments>10</experiments>
</comment>
<comment type="interaction">
    <interactant intactId="EBI-712311">
        <id>P67775</id>
    </interactant>
    <interactant intactId="EBI-1046642">
        <id>O43815</id>
        <label>STRN</label>
    </interactant>
    <organismsDiffer>false</organismsDiffer>
    <experiments>7</experiments>
</comment>
<comment type="interaction">
    <interactant intactId="EBI-712311">
        <id>P67775</id>
    </interactant>
    <interactant intactId="EBI-1054735">
        <id>O75663</id>
        <label>TIPRL</label>
    </interactant>
    <organismsDiffer>false</organismsDiffer>
    <experiments>3</experiments>
</comment>
<comment type="interaction">
    <interactant intactId="EBI-712311">
        <id>P67775</id>
    </interactant>
    <interactant intactId="EBI-17716262">
        <id>Q9UPQ4-2</id>
        <label>TRIM35</label>
    </interactant>
    <organismsDiffer>false</organismsDiffer>
    <experiments>3</experiments>
</comment>
<comment type="interaction">
    <interactant intactId="EBI-712311">
        <id>P67775</id>
    </interactant>
    <interactant intactId="EBI-358993">
        <id>Q15645</id>
        <label>TRIP13</label>
    </interactant>
    <organismsDiffer>false</organismsDiffer>
    <experiments>6</experiments>
</comment>
<comment type="interaction">
    <interactant intactId="EBI-712311">
        <id>P67775</id>
    </interactant>
    <interactant intactId="EBI-2514383">
        <id>Q5T6F2</id>
        <label>UBAP2</label>
    </interactant>
    <organismsDiffer>false</organismsDiffer>
    <experiments>3</experiments>
</comment>
<comment type="interaction">
    <interactant intactId="EBI-712311">
        <id>P67775</id>
    </interactant>
    <interactant intactId="EBI-2107455">
        <id>Q08AM6</id>
        <label>VAC14</label>
    </interactant>
    <organismsDiffer>false</organismsDiffer>
    <experiments>3</experiments>
</comment>
<comment type="interaction">
    <interactant intactId="EBI-712311">
        <id>P67775</id>
    </interactant>
    <interactant intactId="EBI-866453">
        <id>P03129</id>
        <label>E7</label>
    </interactant>
    <organismsDiffer>true</organismsDiffer>
    <experiments>3</experiments>
</comment>
<comment type="interaction">
    <interactant intactId="EBI-712311">
        <id>P67775</id>
    </interactant>
    <interactant intactId="EBI-7005254">
        <id>P04020</id>
        <label>E7</label>
    </interactant>
    <organismsDiffer>true</organismsDiffer>
    <experiments>2</experiments>
</comment>
<comment type="interaction">
    <interactant intactId="EBI-712311">
        <id>P67775</id>
    </interactant>
    <interactant intactId="EBI-7002233">
        <id>Q61249</id>
        <label>Igbp1</label>
    </interactant>
    <organismsDiffer>true</organismsDiffer>
    <experiments>3</experiments>
</comment>
<comment type="interaction">
    <interactant intactId="EBI-712311">
        <id>P67775</id>
    </interactant>
    <interactant intactId="EBI-309684">
        <id>P97346</id>
        <label>Nxn</label>
    </interactant>
    <organismsDiffer>true</organismsDiffer>
    <experiments>2</experiments>
</comment>
<comment type="interaction">
    <interactant intactId="EBI-16765970">
        <id>P67775-1</id>
    </interactant>
    <interactant intactId="EBI-1772895">
        <id>Q9Y570</id>
        <label>PPME1</label>
    </interactant>
    <organismsDiffer>false</organismsDiffer>
    <experiments>2</experiments>
</comment>
<comment type="interaction">
    <interactant intactId="EBI-16765970">
        <id>P67775-1</id>
    </interactant>
    <interactant intactId="EBI-302388">
        <id>P30153</id>
        <label>PPP2R1A</label>
    </interactant>
    <organismsDiffer>false</organismsDiffer>
    <experiments>5</experiments>
</comment>
<comment type="interaction">
    <interactant intactId="EBI-16765970">
        <id>P67775-1</id>
    </interactant>
    <interactant intactId="EBI-1054735">
        <id>O75663</id>
        <label>TIPRL</label>
    </interactant>
    <organismsDiffer>false</organismsDiffer>
    <experiments>3</experiments>
</comment>
<comment type="interaction">
    <interactant intactId="EBI-16766021">
        <id>P67775-2</id>
    </interactant>
    <interactant intactId="EBI-1054735">
        <id>O75663</id>
        <label>TIPRL</label>
    </interactant>
    <organismsDiffer>false</organismsDiffer>
    <experiments>3</experiments>
</comment>
<comment type="subcellular location">
    <subcellularLocation>
        <location evidence="8 39">Cytoplasm</location>
    </subcellularLocation>
    <subcellularLocation>
        <location evidence="8 30 32 39">Nucleus</location>
    </subcellularLocation>
    <subcellularLocation>
        <location evidence="30 32">Chromosome</location>
    </subcellularLocation>
    <subcellularLocation>
        <location evidence="8">Chromosome</location>
        <location evidence="8">Centromere</location>
    </subcellularLocation>
    <subcellularLocation>
        <location evidence="8">Cytoplasm</location>
        <location evidence="8">Cytoskeleton</location>
        <location evidence="8">Spindle pole</location>
    </subcellularLocation>
    <text evidence="2 8 30 32">In prometaphase cells, but not in anaphase cells, localizes at centromeres (PubMed:16541025). During mitosis, also found at spindle poles (PubMed:16541025). Centromeric localization requires the presence of SGO2 (By similarity). Recruited to chromatin and transcription pause-release checkpoint via its association with the Integrator complex (PubMed:33243860, PubMed:34004147).</text>
</comment>
<comment type="alternative products">
    <event type="alternative splicing"/>
    <isoform>
        <id>P67775-1</id>
        <name>1</name>
        <name>PP2Acalpha1</name>
        <sequence type="displayed"/>
    </isoform>
    <isoform>
        <id>P67775-2</id>
        <name>2</name>
        <name>PP2Acalpha2</name>
        <sequence type="described" ref="VSP_044320"/>
    </isoform>
</comment>
<comment type="PTM">
    <text evidence="40">Reversibly methyl esterified on Leu-309 by leucine carboxyl methyltransferase 1 (LCMT1) and protein phosphatase methylesterase 1 (PPME1). Carboxyl methylation influences the affinity of the catalytic subunit for the different regulatory subunits, thereby modulating the PP2A holoenzyme's substrate specificity, enzyme activity and cellular localization.</text>
</comment>
<comment type="PTM">
    <text evidence="3">Phosphorylation of either threonine (by autophosphorylation-activated protein kinase) or tyrosine results in inactivation of the phosphatase. Auto-dephosphorylation has been suggested as a mechanism for reactivation.</text>
</comment>
<comment type="PTM">
    <text evidence="23">Polyubiquitinated, leading to its degradation by the proteasome.</text>
</comment>
<comment type="disease" evidence="27">
    <disease id="DI-05507">
        <name>Houge-Janssens syndrome 3</name>
        <acronym>HJS3</acronym>
        <description>An autosomal dominant neurodevelopmental disorder characterized by global developmental delay with onset in infancy and additional variable features including hypotonia, epilepsy, brain abnormalities such as ventriculomegaly and a small corpus callosum, and autism spectrum disorder.</description>
        <dbReference type="MIM" id="618354"/>
    </disease>
    <text>The disease is caused by variants affecting the gene represented in this entry.</text>
</comment>
<comment type="miscellaneous">
    <molecule>Isoform 2</molecule>
    <text evidence="43">Catalytically inactive, shows enhanced binding to IGBP1, and does not interact with the scaffolding subunit PPP2R1A.</text>
</comment>
<comment type="similarity">
    <text evidence="43">Belongs to the PPP phosphatase family. PP-1 subfamily.</text>
</comment>
<accession>P67775</accession>
<accession>P05323</accession>
<accession>P13197</accession>
<reference key="1">
    <citation type="journal article" date="1988" name="Nucleic Acids Res.">
        <title>The nucleotide sequence of the cDNA encoding the human lung protein phosphatase 2A alpha catalytic subunit.</title>
        <authorList>
            <person name="Stone S.R."/>
            <person name="Mayer R."/>
            <person name="Wernet W."/>
            <person name="Maurer F."/>
            <person name="Hofsteenge J."/>
            <person name="Hemmings B.A."/>
        </authorList>
    </citation>
    <scope>NUCLEOTIDE SEQUENCE [MRNA] (ISOFORM 1)</scope>
    <source>
        <tissue>Fibroblast</tissue>
    </source>
</reference>
<reference key="2">
    <citation type="journal article" date="1988" name="Proc. Natl. Acad. Sci. U.S.A.">
        <title>Human liver phosphatase 2A: cDNA and amino acid sequence of two catalytic subunit isotypes.</title>
        <authorList>
            <person name="Arino J."/>
            <person name="Woon C.W."/>
            <person name="Brautigan D.L."/>
            <person name="Miller T.B. Jr."/>
            <person name="Johnson G.L."/>
        </authorList>
    </citation>
    <scope>NUCLEOTIDE SEQUENCE [MRNA] (ISOFORM 1)</scope>
    <source>
        <tissue>Liver</tissue>
    </source>
</reference>
<reference key="3">
    <citation type="journal article" date="1991" name="Biochemistry">
        <title>Structure and transcriptional regulation of protein phosphatase 2A catalytic subunit genes.</title>
        <authorList>
            <person name="Khew-Goodall Y."/>
            <person name="Mayer R.E."/>
            <person name="Maurer F."/>
            <person name="Stone S.R."/>
            <person name="Hemmings B.A."/>
        </authorList>
    </citation>
    <scope>NUCLEOTIDE SEQUENCE [GENOMIC DNA]</scope>
</reference>
<reference key="4">
    <citation type="journal article" date="2004" name="Genome Res.">
        <title>The status, quality, and expansion of the NIH full-length cDNA project: the Mammalian Gene Collection (MGC).</title>
        <authorList>
            <consortium name="The MGC Project Team"/>
        </authorList>
    </citation>
    <scope>NUCLEOTIDE SEQUENCE [LARGE SCALE MRNA] (ISOFORM 1)</scope>
    <source>
        <tissue>Lung</tissue>
        <tissue>Placenta</tissue>
        <tissue>Uterus</tissue>
    </source>
</reference>
<reference key="5">
    <citation type="journal article" date="1991" name="Mol. Cell. Biol.">
        <title>Dephosphorylation of simian virus 40 large-T antigen and p53 protein by protein phosphatase 2A: inhibition by small-t antigen.</title>
        <authorList>
            <person name="Scheidtmann K.H."/>
            <person name="Mumby M.C."/>
            <person name="Rundell K."/>
            <person name="Walter G."/>
        </authorList>
    </citation>
    <scope>DEPHOSPHORYLATION OF SV40 LARGE-T ANTIGEN AND P53 PROTEIN</scope>
    <scope>CATALYTIC ACTIVITY</scope>
</reference>
<reference key="6">
    <citation type="journal article" date="1994" name="J. Biol. Chem.">
        <title>The catalytic subunit of protein phosphatase 2A is carboxyl-methylated in vivo.</title>
        <authorList>
            <person name="Favre B."/>
            <person name="Zolnierowicz S."/>
            <person name="Turowski P."/>
            <person name="Hemmings B.A."/>
        </authorList>
    </citation>
    <scope>METHYLATION AT LEU-309</scope>
</reference>
<reference key="7">
    <citation type="journal article" date="1998" name="Biochem. Biophys. Res. Commun.">
        <title>Alpha 4 associates with protein phosphatases 2A, 4, and 6.</title>
        <authorList>
            <person name="Chen J."/>
            <person name="Peterson R.T."/>
            <person name="Schreiber S.L."/>
        </authorList>
    </citation>
    <scope>INTERACTION WITH IGBP1</scope>
</reference>
<reference key="8">
    <citation type="journal article" date="1999" name="Biochem. J.">
        <title>Methylated C-terminal leucine residue of PP2A catalytic subunit is important for binding of regulatory Balpha subunit.</title>
        <authorList>
            <person name="Bryant J.C."/>
            <person name="Westphal R.S."/>
            <person name="Wadzinski B.E."/>
        </authorList>
    </citation>
    <scope>MUTAGENESIS OF LEU-309</scope>
</reference>
<reference key="9">
    <citation type="journal article" date="1989" name="EMBO J.">
        <title>Activation of SV40 DNA replication in vitro by cellular protein phosphatase 2A.</title>
        <authorList>
            <person name="Virshup D.M."/>
            <person name="Kauffman M.G."/>
            <person name="Kelly T.J."/>
        </authorList>
    </citation>
    <scope>PARTIAL PROTEIN SEQUENCE</scope>
    <scope>ACTIVATION OF SV40 REPLICATION</scope>
</reference>
<reference key="10">
    <citation type="journal article" date="1999" name="J. Biol. Chem.">
        <title>Identification of a domain of Axin that binds to the serine/threonine protein phosphatase 2A and a self-binding domain.</title>
        <authorList>
            <person name="Hsu W."/>
            <person name="Zeng L."/>
            <person name="Costantini F."/>
        </authorList>
    </citation>
    <scope>FUNCTION</scope>
</reference>
<reference key="11">
    <citation type="journal article" date="2000" name="J. Biol. Chem.">
        <title>Raf-1-associated protein phosphatase 2A as a positive regulator of kinase activation.</title>
        <authorList>
            <person name="Abraham D."/>
            <person name="Podar K."/>
            <person name="Pacher M."/>
            <person name="Kubicek M."/>
            <person name="Welzel N."/>
            <person name="Hemmings B.A."/>
            <person name="Dilworth S.M."/>
            <person name="Mischak H."/>
            <person name="Kolch W."/>
            <person name="Baccarini M."/>
        </authorList>
    </citation>
    <scope>FUNCTION</scope>
    <scope>INTERACTION WITH RAF1</scope>
</reference>
<reference key="12">
    <citation type="journal article" date="2006" name="Dev. Cell">
        <title>PP2A is required for centromeric localization of Sgo1 and proper chromosome segregation.</title>
        <authorList>
            <person name="Tang Z."/>
            <person name="Shu H."/>
            <person name="Qi W."/>
            <person name="Mahmood N.A."/>
            <person name="Mumby M.C."/>
            <person name="Yu H."/>
        </authorList>
    </citation>
    <scope>IDENTIFICATION BY MASS SPECTROMETRY</scope>
    <scope>INTERACTION WITH SGO1</scope>
</reference>
<reference key="13">
    <citation type="journal article" date="2006" name="Mol. Pharmacol.">
        <title>A direct interaction between the N terminus of adenylyl cyclase AC8 and the catalytic subunit of protein phosphatase 2A.</title>
        <authorList>
            <person name="Crossthwaite A.J."/>
            <person name="Ciruela A."/>
            <person name="Rayner T.F."/>
            <person name="Cooper D.M."/>
        </authorList>
    </citation>
    <scope>INTERACTION WITH ADCY8</scope>
</reference>
<reference key="14">
    <citation type="journal article" date="2006" name="Nature">
        <title>Shugoshin collaborates with protein phosphatase 2A to protect cohesin.</title>
        <authorList>
            <person name="Kitajima T.S."/>
            <person name="Sakuno T."/>
            <person name="Ishiguro K."/>
            <person name="Iemura S."/>
            <person name="Natsume T."/>
            <person name="Kawashima S.A."/>
            <person name="Watanabe Y."/>
        </authorList>
    </citation>
    <scope>SUBCELLULAR LOCATION</scope>
    <scope>INTERACTION WITH SGO1</scope>
</reference>
<reference key="15">
    <citation type="journal article" date="2003" name="J. Biol. Chem.">
        <title>Protein phosphatase 2A regulates the stability of Pim protein kinases.</title>
        <authorList>
            <person name="Losman J.A."/>
            <person name="Chen X.P."/>
            <person name="Vuong B.Q."/>
            <person name="Fay S."/>
            <person name="Rothman P.B."/>
        </authorList>
    </citation>
    <scope>FUNCTION</scope>
</reference>
<reference key="16">
    <citation type="journal article" date="2007" name="EMBO J.">
        <title>A specific PP2A regulatory subunit, B56gamma, mediates DNA damage-induced dephosphorylation of p53 at Thr55.</title>
        <authorList>
            <person name="Li H.H."/>
            <person name="Cai X."/>
            <person name="Shouse G.P."/>
            <person name="Piluso L.G."/>
            <person name="Liu X."/>
        </authorList>
    </citation>
    <scope>FUNCTION</scope>
</reference>
<reference key="17">
    <citation type="journal article" date="2007" name="J. Cell Biol.">
        <title>Tripin/hSgo2 recruits MCAK to the inner centromere to correct defective kinetochore attachments.</title>
        <authorList>
            <person name="Huang H."/>
            <person name="Feng J."/>
            <person name="Famulski J."/>
            <person name="Rattner J.B."/>
            <person name="Liu S.T."/>
            <person name="Kao G.D."/>
            <person name="Muschel R."/>
            <person name="Chan G.K."/>
            <person name="Yen T.J."/>
        </authorList>
    </citation>
    <scope>INTERACTION WITH SGO2</scope>
</reference>
<reference key="18">
    <citation type="journal article" date="2008" name="J. Biol. Chem.">
        <title>Tesk1 interacts with Spry2 to abrogate its inhibition of ERK phosphorylation downstream of receptor tyrosine kinase signaling.</title>
        <authorList>
            <person name="Chandramouli S."/>
            <person name="Yu C.Y."/>
            <person name="Yusoff P."/>
            <person name="Lao D.H."/>
            <person name="Leong H.F."/>
            <person name="Mizuno K."/>
            <person name="Guy G.R."/>
        </authorList>
    </citation>
    <scope>INTERACTION WITH SPRY2</scope>
</reference>
<reference key="19">
    <citation type="journal article" date="2009" name="Mol. Cell">
        <title>Alpha4 is an essential regulator of PP2A phosphatase activity.</title>
        <authorList>
            <person name="Kong M."/>
            <person name="Ditsworth D."/>
            <person name="Lindsten T."/>
            <person name="Thompson C.B."/>
        </authorList>
    </citation>
    <scope>INTERACTION WITH IGBP1</scope>
</reference>
<reference key="20">
    <citation type="journal article" date="2010" name="Biochemistry">
        <title>Alpha4 is a ubiquitin-binding protein that regulates protein serine/threonine phosphatase 2A ubiquitination.</title>
        <authorList>
            <person name="McConnell J.L."/>
            <person name="Watkins G.R."/>
            <person name="Soss S.E."/>
            <person name="Franz H.S."/>
            <person name="McCorvey L.R."/>
            <person name="Spiller B.W."/>
            <person name="Chazin W.J."/>
            <person name="Wadzinski B.E."/>
        </authorList>
    </citation>
    <scope>INTERACTION WITH IGBP1</scope>
</reference>
<reference key="21">
    <citation type="journal article" date="2010" name="Proc. Natl. Acad. Sci. U.S.A.">
        <title>Role of DAB2IP in modulating epithelial-to-mesenchymal transition and prostate cancer metastasis.</title>
        <authorList>
            <person name="Xie D."/>
            <person name="Gore C."/>
            <person name="Liu J."/>
            <person name="Pong R.C."/>
            <person name="Mason R."/>
            <person name="Hao G."/>
            <person name="Long M."/>
            <person name="Kabbani W."/>
            <person name="Yu L."/>
            <person name="Zhang H."/>
            <person name="Chen H."/>
            <person name="Sun X."/>
            <person name="Boothman D.A."/>
            <person name="Min W."/>
            <person name="Hsieh J.T."/>
        </authorList>
    </citation>
    <scope>INTERACTION WITH GSK3B</scope>
</reference>
<reference key="22">
    <citation type="journal article" date="2012" name="J. Biol. Chem.">
        <title>Identification and characterization of an alternatively spliced isoform of the human protein phosphatase 2Aalpha catalytic subunit.</title>
        <authorList>
            <person name="Migueleti D.L."/>
            <person name="Smetana J.H."/>
            <person name="Nunes H.F."/>
            <person name="Kobarg J."/>
            <person name="Zanchin N.I."/>
        </authorList>
    </citation>
    <scope>ALTERNATIVE SPLICING (ISOFORM 2)</scope>
</reference>
<reference key="23">
    <citation type="journal article" date="2012" name="J. Biol. Chem.">
        <title>Monoubiquitination promotes calpain cleavage of the protein phosphatase 2A (PP2A) regulatory subunit alpha4, altering PP2A stability and microtubule-associated protein phosphorylation.</title>
        <authorList>
            <person name="Watkins G.R."/>
            <person name="Wang N."/>
            <person name="Mazalouskas M.D."/>
            <person name="Gomez R.J."/>
            <person name="Guthrie C.R."/>
            <person name="Kraemer B.C."/>
            <person name="Schweiger S."/>
            <person name="Spiller B.W."/>
            <person name="Wadzinski B.E."/>
        </authorList>
    </citation>
    <scope>FUNCTION</scope>
</reference>
<reference key="24">
    <citation type="journal article" date="2015" name="Cell Cycle">
        <title>AMBRA1 and BECLIN 1 interplay in the crosstalk between autophagy and cell proliferation.</title>
        <authorList>
            <person name="Cianfanelli V."/>
            <person name="D'Orazio M."/>
            <person name="Cecconi F."/>
        </authorList>
    </citation>
    <scope>INTERACTION WITH BECN1 AND AMBRA1</scope>
</reference>
<reference key="25">
    <citation type="journal article" date="2015" name="Nat. Cell Biol.">
        <title>AMBRA1 links autophagy to cell proliferation and tumorigenesis by promoting c-Myc dephosphorylation and degradation.</title>
        <authorList>
            <person name="Cianfanelli V."/>
            <person name="Fuoco C."/>
            <person name="Lorente M."/>
            <person name="Salazar M."/>
            <person name="Quondamatteo F."/>
            <person name="Gherardini P.F."/>
            <person name="De Zio D."/>
            <person name="Nazio F."/>
            <person name="Antonioli M."/>
            <person name="D'Orazio M."/>
            <person name="Skobo T."/>
            <person name="Bordi M."/>
            <person name="Rohde M."/>
            <person name="Dalla Valle L."/>
            <person name="Helmer-Citterich M."/>
            <person name="Gretzmeier C."/>
            <person name="Dengjel J."/>
            <person name="Fimia G.M."/>
            <person name="Piacentini M."/>
            <person name="Di Bartolomeo S."/>
            <person name="Velasco G."/>
            <person name="Cecconi F."/>
        </authorList>
    </citation>
    <scope>FUNCTION</scope>
    <scope>INTERACTION WITH AMBRA1</scope>
</reference>
<reference key="26">
    <citation type="journal article" date="2015" name="Nat. Cell Biol.">
        <authorList>
            <person name="Cianfanelli V."/>
            <person name="Fuoco C."/>
            <person name="Lorente M."/>
            <person name="Salazar M."/>
            <person name="Quondamatteo F."/>
            <person name="Gherardini P.F."/>
            <person name="De Zio D."/>
            <person name="Nazio F."/>
            <person name="Antonioli M."/>
            <person name="D'Orazio M."/>
            <person name="Skobo T."/>
            <person name="Bordi M."/>
            <person name="Rohde M."/>
            <person name="Dalla Valle L."/>
            <person name="Helmer-Citterich M."/>
            <person name="Gretzmeier C."/>
            <person name="Dengjel J."/>
            <person name="Fimia G.M."/>
            <person name="Piacentini M."/>
            <person name="Di Bartolomeo S."/>
            <person name="Velasco G."/>
            <person name="Cecconi F."/>
        </authorList>
    </citation>
    <scope>ERRATUM OF PUBMED:25438055</scope>
</reference>
<reference key="27">
    <citation type="journal article" date="2016" name="Oncotarget">
        <title>FAM122A, a new endogenous inhibitor of protein phosphatase 2A.</title>
        <authorList>
            <person name="Fan L."/>
            <person name="Liu M.H."/>
            <person name="Guo M."/>
            <person name="Hu C.X."/>
            <person name="Yan Z.W."/>
            <person name="Chen J."/>
            <person name="Chen G.Q."/>
            <person name="Huang Y."/>
        </authorList>
    </citation>
    <scope>INTERACTION WITH PABIR1</scope>
    <scope>UBIQUITINATION</scope>
    <scope>PROTEASOMAL DEGRADATION</scope>
</reference>
<reference key="28">
    <citation type="journal article" date="2017" name="Mol. Immunol.">
        <title>MFHAS1 suppresses TLR4 signaling pathway via induction of PP2A C subunit cytoplasm translocation and inhibition of c-Jun dephosphorylation at Thr239.</title>
        <authorList>
            <person name="Shi Q."/>
            <person name="Xiong B."/>
            <person name="Zhong J."/>
            <person name="Wang H."/>
            <person name="Ma D."/>
            <person name="Miao C."/>
        </authorList>
    </citation>
    <scope>INTERACTION WITH MFHAS1</scope>
</reference>
<reference key="29">
    <citation type="journal article" date="2018" name="Dev. Cell">
        <title>AMBRA1 controls regulatory T-cell differentiation and homeostasis upstream of the FOXO3-FOXP3 axis.</title>
        <authorList>
            <person name="Becher J."/>
            <person name="Simula L."/>
            <person name="Volpe E."/>
            <person name="Procaccini C."/>
            <person name="La Rocca C."/>
            <person name="D'Acunzo P."/>
            <person name="Cianfanelli V."/>
            <person name="Strappazzon F."/>
            <person name="Caruana I."/>
            <person name="Nazio F."/>
            <person name="Weber G."/>
            <person name="Gigantino V."/>
            <person name="Botti G."/>
            <person name="Ciccosanti F."/>
            <person name="Borsellino G."/>
            <person name="Campello S."/>
            <person name="Mandolesi G."/>
            <person name="De Bardi M."/>
            <person name="Fimia G.M."/>
            <person name="D'Amelio M."/>
            <person name="Ruffini F."/>
            <person name="Furlan R."/>
            <person name="Centonze D."/>
            <person name="Martino G."/>
            <person name="Braghetta P."/>
            <person name="Chrisam M."/>
            <person name="Bonaldo P."/>
            <person name="Matarese G."/>
            <person name="Locatelli F."/>
            <person name="Battistini L."/>
            <person name="Cecconi F."/>
        </authorList>
    </citation>
    <scope>FUNCTION</scope>
    <scope>INTERACTION WITH AMBRA1</scope>
</reference>
<reference key="30">
    <citation type="journal article" date="2018" name="IScience">
        <title>Mitogenic Signals Stimulate the CREB Coactivator CRTC3 through PP2A Recruitment.</title>
        <authorList>
            <person name="Sonntag T."/>
            <person name="Ostojic J."/>
            <person name="Vaughan J.M."/>
            <person name="Moresco J.J."/>
            <person name="Yoon Y.S."/>
            <person name="Yates J.R. III"/>
            <person name="Montminy M."/>
        </authorList>
    </citation>
    <scope>CATALYTIC ACTIVITY</scope>
    <scope>INTERACTION WITH CRTC3</scope>
</reference>
<reference key="31">
    <citation type="journal article" date="2018" name="J. Exp. Med.">
        <title>Metabolic control of regulatory T cell stability and function by TRAF3IP3 at the lysosome.</title>
        <authorList>
            <person name="Yu X."/>
            <person name="Teng X.L."/>
            <person name="Wang F."/>
            <person name="Zheng Y."/>
            <person name="Qu G."/>
            <person name="Zhou Y."/>
            <person name="Hu Z."/>
            <person name="Wu Z."/>
            <person name="Chang Y."/>
            <person name="Chen L."/>
            <person name="Li H.B."/>
            <person name="Su B."/>
            <person name="Lu L."/>
            <person name="Liu Z."/>
            <person name="Sun S.C."/>
            <person name="Zou Q."/>
        </authorList>
    </citation>
    <scope>INTERACTION WITH TRAF3IP3</scope>
</reference>
<reference key="32">
    <citation type="journal article" date="2020" name="Mol. Cell">
        <title>CHK1 Inhibitor Blocks Phosphorylation of FAM122A and Promotes Replication Stress.</title>
        <authorList>
            <person name="Li F."/>
            <person name="Kozono D."/>
            <person name="Deraska P."/>
            <person name="Branigan T."/>
            <person name="Dunn C."/>
            <person name="Zheng X.F."/>
            <person name="Parmar K."/>
            <person name="Nguyen H."/>
            <person name="DeCaprio J."/>
            <person name="Shapiro G.I."/>
            <person name="Chowdhury D."/>
            <person name="D'Andrea A.D."/>
        </authorList>
    </citation>
    <scope>FUNCTION</scope>
</reference>
<reference key="33">
    <citation type="journal article" date="2021" name="Cell">
        <title>The PP2A-Integrator-CDK9 axis fine-tunes transcription and can be targeted therapeutically in cancer.</title>
        <authorList>
            <person name="Vervoort S.J."/>
            <person name="Welsh S.A."/>
            <person name="Devlin J.R."/>
            <person name="Barbieri E."/>
            <person name="Knight D.A."/>
            <person name="Offley S."/>
            <person name="Bjelosevic S."/>
            <person name="Costacurta M."/>
            <person name="Todorovski I."/>
            <person name="Kearney C.J."/>
            <person name="Sandow J.J."/>
            <person name="Fan Z."/>
            <person name="Blyth B."/>
            <person name="McLeod V."/>
            <person name="Vissers J.H.A."/>
            <person name="Pavic K."/>
            <person name="Martin B.P."/>
            <person name="Gregory G."/>
            <person name="Demosthenous E."/>
            <person name="Zethoven M."/>
            <person name="Kong I.Y."/>
            <person name="Hawkins E.D."/>
            <person name="Hogg S.J."/>
            <person name="Kelly M.J."/>
            <person name="Newbold A."/>
            <person name="Simpson K.J."/>
            <person name="Kauko O."/>
            <person name="Harvey K.F."/>
            <person name="Ohlmeyer M."/>
            <person name="Westermarck J."/>
            <person name="Gray N."/>
            <person name="Gardini A."/>
            <person name="Johnstone R.W."/>
        </authorList>
    </citation>
    <scope>FUNCTION</scope>
    <scope>CATALYTIC ACTIVITY</scope>
    <scope>IDENTIFICATION IN THE INTAC COMPLEX</scope>
    <scope>SUBCELLULAR LOCATION</scope>
</reference>
<reference key="34">
    <citation type="journal article" date="2023" name="Genes (Basel)">
        <title>Novel Variants of PPP2R1A in Catalytic Subunit Binding Domain and Genotype-Phenotype Analysis in Neurodevelopmentally Delayed Patients.</title>
        <authorList>
            <person name="Qian Y."/>
            <person name="Jiang Y."/>
            <person name="Wang J."/>
            <person name="Li G."/>
            <person name="Wu B."/>
            <person name="Zhou Y."/>
            <person name="Xu X."/>
            <person name="Wang H."/>
        </authorList>
    </citation>
    <scope>INTERACTION WITH PPP2R1A</scope>
</reference>
<reference key="35">
    <citation type="journal article" date="2023" name="Mol. Cell">
        <title>INTAC endonuclease and phosphatase modules differentially regulate transcription by RNA polymerase II.</title>
        <authorList>
            <person name="Hu S."/>
            <person name="Peng L."/>
            <person name="Song A."/>
            <person name="Ji Y.X."/>
            <person name="Cheng J."/>
            <person name="Wang M."/>
            <person name="Chen F.X."/>
        </authorList>
    </citation>
    <scope>FUNCTION</scope>
    <scope>IDENTIFICATION IN THE INTAC COMPLEX</scope>
</reference>
<reference key="36">
    <citation type="journal article" date="2024" name="Mol. Cell">
        <title>Cytoplasmic binding partners of the Integrator endonuclease INTS11 and its paralog CPSF73 are required for their nuclear function.</title>
        <authorList>
            <person name="Lin M.H."/>
            <person name="Jensen M.K."/>
            <person name="Elrod N.D."/>
            <person name="Chu H.F."/>
            <person name="Haseley M."/>
            <person name="Beam A.C."/>
            <person name="Huang K.L."/>
            <person name="Chiang W."/>
            <person name="Russell W.K."/>
            <person name="Williams K."/>
            <person name="Proschel C."/>
            <person name="Wagner E.J."/>
            <person name="Tong L."/>
        </authorList>
    </citation>
    <scope>SUBCELLULAR LOCATION</scope>
</reference>
<reference key="37">
    <citation type="journal article" date="2006" name="Cell">
        <title>Structure of protein phosphatase 2A core enzyme bound to tumor-inducing toxins.</title>
        <authorList>
            <person name="Xing Y."/>
            <person name="Xu Y."/>
            <person name="Chen Y."/>
            <person name="Jeffrey P.D."/>
            <person name="Chao Y."/>
            <person name="Lin Z."/>
            <person name="Li Z."/>
            <person name="Strack S."/>
            <person name="Stock J.B."/>
            <person name="Shi Y."/>
        </authorList>
    </citation>
    <scope>X-RAY CRYSTALLOGRAPHY (2.6 ANGSTROMS) IN COMPLEX WITH MANGANESE IONS</scope>
    <scope>COFACTOR</scope>
</reference>
<reference key="38">
    <citation type="journal article" date="2008" name="Cell">
        <title>Structural mechanism of demethylation and inactivation of protein phosphatase 2A.</title>
        <authorList>
            <person name="Xing Y."/>
            <person name="Li Z."/>
            <person name="Chen Y."/>
            <person name="Stock J.B."/>
            <person name="Jeffrey P.D."/>
            <person name="Shi Y."/>
        </authorList>
    </citation>
    <scope>X-RAY CRYSTALLOGRAPHY (2.8 ANGSTROMS) IN COMPLEX WITH PPP2R1A AND PPME1</scope>
</reference>
<reference evidence="44" key="39">
    <citation type="journal article" date="2014" name="Biol. Chem.">
        <title>Structural basis for PTPA interaction with the invariant C-terminal tail of PP2A.</title>
        <authorList>
            <person name="Low C."/>
            <person name="Quistgaard E.M."/>
            <person name="Kovermann M."/>
            <person name="Anandapadamanaban M."/>
            <person name="Balbach J."/>
            <person name="Nordlund P."/>
        </authorList>
    </citation>
    <scope>X-RAY CRYSTALLOGRAPHY (1.80 ANGSTROMS) OF 304-309 IN COMPLEX WITH PTPA</scope>
    <scope>INTERACTION WITH PTPA</scope>
</reference>
<reference evidence="45" key="40">
    <citation type="journal article" date="2020" name="Science">
        <title>Identification of Integrator-PP2A complex (INTAC), an RNA polymerase II phosphatase.</title>
        <authorList>
            <person name="Zheng H."/>
            <person name="Qi Y."/>
            <person name="Hu S."/>
            <person name="Cao X."/>
            <person name="Xu C."/>
            <person name="Yin Z."/>
            <person name="Chen X."/>
            <person name="Li Y."/>
            <person name="Liu W."/>
            <person name="Li J."/>
            <person name="Wang J."/>
            <person name="Wei G."/>
            <person name="Liang K."/>
            <person name="Chen F.X."/>
            <person name="Xu Y."/>
        </authorList>
    </citation>
    <scope>STRUCTURE BY ELECTRON MICROSCOPY (3.50 ANGSTROMS) OF INTAC COMPLEX</scope>
    <scope>FUNCTION</scope>
    <scope>CATALYTIC ACTIVITY</scope>
    <scope>COFACTOR</scope>
    <scope>IDENTIFICATION IN THE INTAC COMPLEX</scope>
    <scope>SUBCELLULAR LOCATION</scope>
</reference>
<reference evidence="46" key="41">
    <citation type="journal article" date="2021" name="Nat. Struct. Mol. Biol.">
        <title>Cryo-EM structure of the Hippo signaling integrator human STRIPAK.</title>
        <authorList>
            <person name="Jeong B.C."/>
            <person name="Bae S.J."/>
            <person name="Ni L."/>
            <person name="Zhang X."/>
            <person name="Bai X.C."/>
            <person name="Luo X."/>
        </authorList>
    </citation>
    <scope>STRUCTURE BY ELECTRON MICROSCOPY (3.30 ANGSTROMS) IN STRIPAK COMPLEX AND IN COMPLEX WITH MANGANESE IONS</scope>
    <scope>SUBUNIT</scope>
    <scope>FUNCTION</scope>
</reference>
<reference evidence="47" key="42">
    <citation type="journal article" date="2021" name="Science">
        <title>Structural basis of Integrator-mediated transcription regulation.</title>
        <authorList>
            <person name="Fianu I."/>
            <person name="Chen Y."/>
            <person name="Dienemann C."/>
            <person name="Dybkov O."/>
            <person name="Linden A."/>
            <person name="Urlaub H."/>
            <person name="Cramer P."/>
        </authorList>
    </citation>
    <scope>STRUCTURE BY ELECTRON MICROSCOPY (3.60 ANGSTROMS) OF INTAC COMPLEX</scope>
    <scope>COFACTOR</scope>
    <scope>IDENTIFICATION IN THE INTAC COMPLEX</scope>
</reference>
<reference evidence="48" key="43">
    <citation type="journal article" date="2023" name="Protein Cell">
        <title>Structural basis of INTAC-regulated transcription.</title>
        <authorList>
            <person name="Zheng H."/>
            <person name="Jin Q."/>
            <person name="Wang X."/>
            <person name="Qi Y."/>
            <person name="Liu W."/>
            <person name="Ren Y."/>
            <person name="Zhao D."/>
            <person name="Xavier Chen F."/>
            <person name="Cheng J."/>
            <person name="Chen X."/>
            <person name="Xu Y."/>
        </authorList>
    </citation>
    <scope>STRUCTURE BY ELECTRON MICROSCOPY (4.18 ANGSTROMS) OF INTAC COMPLEX</scope>
</reference>
<reference evidence="49 50 51" key="44">
    <citation type="journal article" date="2024" name="Nature">
        <title>Structural basis of Integrator-dependent RNA polymerase II termination.</title>
        <authorList>
            <person name="Fianu I."/>
            <person name="Ochmann M."/>
            <person name="Walshe J.L."/>
            <person name="Dybkov O."/>
            <person name="Cruz J.N."/>
            <person name="Urlaub H."/>
            <person name="Cramer P."/>
        </authorList>
    </citation>
    <scope>STRUCTURE BY ELECTRON MICROSCOPY (3.10 ANGSTROMS) OF INTAC COMPLEX</scope>
    <scope>IDENTIFICATION IN THE INTAC COMPLEX</scope>
</reference>
<reference key="45">
    <citation type="journal article" date="2019" name="Am. J. Hum. Genet.">
        <title>De novo mutations affecting the catalytic C alpha subunit of PP2A, PPP2CA, cause syndromic intellectual disability resembling other PP2A-related neurodevelopmental disorders.</title>
        <authorList>
            <person name="Reynhout S."/>
            <person name="Jansen S."/>
            <person name="Haesen D."/>
            <person name="van Belle S."/>
            <person name="de Munnik S.A."/>
            <person name="Bongers E.M.H.F."/>
            <person name="Schieving J.H."/>
            <person name="Marcelis C."/>
            <person name="Amiel J."/>
            <person name="Rio M."/>
            <person name="Mclaughlin H."/>
            <person name="Ladda R."/>
            <person name="Sell S."/>
            <person name="Kriek M."/>
            <person name="Peeters-Scholte C.M.P.C.D."/>
            <person name="Terhal P.A."/>
            <person name="van Gassen K.L."/>
            <person name="Verbeek N."/>
            <person name="Henry S."/>
            <person name="Scott Schwoerer J."/>
            <person name="Malik S."/>
            <person name="Revencu N."/>
            <person name="Ferreira C.R."/>
            <person name="Macnamara E."/>
            <person name="Braakman H.M.H."/>
            <person name="Brimble E."/>
            <person name="Ruzhnikov M.R.Z."/>
            <person name="Wagner M."/>
            <person name="Harrer P."/>
            <person name="Wieczorek D."/>
            <person name="Kuechler A."/>
            <person name="Tziperman B."/>
            <person name="Barel O."/>
            <person name="de Vries B.B.A."/>
            <person name="Gordon C.T."/>
            <person name="Janssens V."/>
            <person name="Vissers L.E.L.M."/>
        </authorList>
    </citation>
    <scope>INVOLVEMENT IN HJS3</scope>
    <scope>VARIANTS HJS3 VAL-60; GLY-88; HIS-122; 125-GLN--LEU-309 DEL; CYS-127; HIS-131; ARG-191; 214-ARG--LEU-309 DEL; HIS-223; VAL-223; CYS-265; 295-ARG--LEU-309 DEL AND PHE-308 INS</scope>
    <scope>CHARACTERIZATION OF VARIANTS HJS3 GLY-88; HIS-122; 125-GLN--LEU-309 DEL; CYS-127; HIS-131; ARG-191; 214-ARG--LEU-309 DEL; HIS-223; VAL-223; CYS-265; 295-ARG--LEU-309 DEL AND PHE-308 INS</scope>
    <scope>CATALYTIC ACTIVITY</scope>
    <scope>MUTAGENESIS OF ASP-85</scope>
    <scope>CARBOXYMETHYLATION</scope>
    <scope>INTERACTION WITH PP2A SUBUNIT A AND PP2A SUBUNITS B</scope>
</reference>
<reference evidence="52 53 54 55" key="46">
    <citation type="journal article" date="2024" name="Nature">
        <title>Cryo-EM structures of PP2A:B55-FAM122A and PP2A:B55-ARPP19.</title>
        <authorList>
            <person name="Padi S.K.R."/>
            <person name="Vos M.R."/>
            <person name="Godek R.J."/>
            <person name="Fuller J.R."/>
            <person name="Kruse T."/>
            <person name="Hein J.B."/>
            <person name="Nilsson J."/>
            <person name="Kelker M.S."/>
            <person name="Page R."/>
            <person name="Peti W."/>
        </authorList>
    </citation>
    <scope>STRUCTURE BY ELECTRON MICROSCOPY (2.55 ANGSTROMS) IN COMPLEXES WITH PPP2R1A; PPP2R2A; IRON; ZINC; ARPP19 AND PABIR1/FAM122A</scope>
    <scope>COFACTOR</scope>
    <scope>ACTIVITY REGULATION</scope>
    <scope>INTERACTION WITH PPP2R1A AND PPP2R2A</scope>
</reference>
<sequence>MDEKVFTKELDQWIEQLNECKQLSESQVKSLCEKAKEILTKESNVQEVRCPVTVCGDVHGQFHDLMELFRIGGKSPDTNYLFMGDYVDRGYYSVETVTLLVALKVRYRERITILRGNHESRQITQVYGFYDECLRKYGNANVWKYFTDLFDYLPLTALVDGQIFCLHGGLSPSIDTLDHIRALDRLQEVPHEGPMCDLLWSDPDDRGGWGISPRGAGYTFGQDISETFNHANGLTLVSRAHQLVMEGYNWCHDRNVVTIFSAPNYCYRCGNQAAIMELDDTLKYSFLQFDPAPRRGEPHVTRRTPDYFL</sequence>
<gene>
    <name type="primary">PPP2CA</name>
</gene>
<dbReference type="EC" id="3.1.3.16" evidence="15 27 28 30"/>
<dbReference type="EMBL" id="X12646">
    <property type="protein sequence ID" value="CAA31176.1"/>
    <property type="molecule type" value="mRNA"/>
</dbReference>
<dbReference type="EMBL" id="J03804">
    <property type="protein sequence ID" value="AAB38019.1"/>
    <property type="molecule type" value="mRNA"/>
</dbReference>
<dbReference type="EMBL" id="M60483">
    <property type="protein sequence ID" value="AAA36466.1"/>
    <property type="molecule type" value="Genomic_DNA"/>
</dbReference>
<dbReference type="EMBL" id="BC000400">
    <property type="protein sequence ID" value="AAH00400.1"/>
    <property type="molecule type" value="mRNA"/>
</dbReference>
<dbReference type="EMBL" id="BC002657">
    <property type="protein sequence ID" value="AAH02657.1"/>
    <property type="molecule type" value="mRNA"/>
</dbReference>
<dbReference type="EMBL" id="BC019275">
    <property type="protein sequence ID" value="AAH19275.1"/>
    <property type="molecule type" value="mRNA"/>
</dbReference>
<dbReference type="EMBL" id="BC031696">
    <property type="protein sequence ID" value="AAH31696.1"/>
    <property type="molecule type" value="mRNA"/>
</dbReference>
<dbReference type="CCDS" id="CCDS4173.1">
    <molecule id="P67775-1"/>
</dbReference>
<dbReference type="PIR" id="S01986">
    <property type="entry name" value="PAHU2A"/>
</dbReference>
<dbReference type="RefSeq" id="NP_002706.1">
    <molecule id="P67775-1"/>
    <property type="nucleotide sequence ID" value="NM_002715.4"/>
</dbReference>
<dbReference type="PDB" id="2IAE">
    <property type="method" value="X-ray"/>
    <property type="resolution" value="3.50 A"/>
    <property type="chains" value="C/F=1-309"/>
</dbReference>
<dbReference type="PDB" id="2IE3">
    <property type="method" value="X-ray"/>
    <property type="resolution" value="2.80 A"/>
    <property type="chains" value="C=1-309"/>
</dbReference>
<dbReference type="PDB" id="2IE4">
    <property type="method" value="X-ray"/>
    <property type="resolution" value="2.60 A"/>
    <property type="chains" value="C=1-309"/>
</dbReference>
<dbReference type="PDB" id="2NPP">
    <property type="method" value="X-ray"/>
    <property type="resolution" value="3.30 A"/>
    <property type="chains" value="C/F=1-309"/>
</dbReference>
<dbReference type="PDB" id="2NYL">
    <property type="method" value="X-ray"/>
    <property type="resolution" value="3.80 A"/>
    <property type="chains" value="C/F=2-294"/>
</dbReference>
<dbReference type="PDB" id="2NYM">
    <property type="method" value="X-ray"/>
    <property type="resolution" value="3.60 A"/>
    <property type="chains" value="C/F=2-294"/>
</dbReference>
<dbReference type="PDB" id="3C5W">
    <property type="method" value="X-ray"/>
    <property type="resolution" value="2.80 A"/>
    <property type="chains" value="C=1-309"/>
</dbReference>
<dbReference type="PDB" id="3DW8">
    <property type="method" value="X-ray"/>
    <property type="resolution" value="2.85 A"/>
    <property type="chains" value="C/F=1-309"/>
</dbReference>
<dbReference type="PDB" id="3FGA">
    <property type="method" value="X-ray"/>
    <property type="resolution" value="2.70 A"/>
    <property type="chains" value="C=1-309"/>
</dbReference>
<dbReference type="PDB" id="3K7V">
    <property type="method" value="X-ray"/>
    <property type="resolution" value="2.85 A"/>
    <property type="chains" value="C=1-309"/>
</dbReference>
<dbReference type="PDB" id="3K7W">
    <property type="method" value="X-ray"/>
    <property type="resolution" value="2.96 A"/>
    <property type="chains" value="C=1-309"/>
</dbReference>
<dbReference type="PDB" id="3P71">
    <property type="method" value="X-ray"/>
    <property type="resolution" value="2.70 A"/>
    <property type="chains" value="C=1-309"/>
</dbReference>
<dbReference type="PDB" id="4I5L">
    <property type="method" value="X-ray"/>
    <property type="resolution" value="2.43 A"/>
    <property type="chains" value="C/F=1-309"/>
</dbReference>
<dbReference type="PDB" id="4I5N">
    <property type="method" value="X-ray"/>
    <property type="resolution" value="2.80 A"/>
    <property type="chains" value="C/F=1-309"/>
</dbReference>
<dbReference type="PDB" id="4IYP">
    <property type="method" value="X-ray"/>
    <property type="resolution" value="2.80 A"/>
    <property type="chains" value="C=6-153"/>
</dbReference>
<dbReference type="PDB" id="4LAC">
    <property type="method" value="X-ray"/>
    <property type="resolution" value="2.82 A"/>
    <property type="chains" value="C=1-309"/>
</dbReference>
<dbReference type="PDB" id="4NY3">
    <property type="method" value="X-ray"/>
    <property type="resolution" value="1.80 A"/>
    <property type="chains" value="C/D=304-309"/>
</dbReference>
<dbReference type="PDB" id="5W0W">
    <property type="method" value="X-ray"/>
    <property type="resolution" value="3.80 A"/>
    <property type="chains" value="C/F/I/L=1-309"/>
</dbReference>
<dbReference type="PDB" id="6NTS">
    <property type="method" value="EM"/>
    <property type="resolution" value="3.63 A"/>
    <property type="chains" value="C=1-301"/>
</dbReference>
<dbReference type="PDB" id="7CUN">
    <property type="method" value="EM"/>
    <property type="resolution" value="3.50 A"/>
    <property type="chains" value="Q=1-309"/>
</dbReference>
<dbReference type="PDB" id="7K36">
    <property type="method" value="EM"/>
    <property type="resolution" value="3.30 A"/>
    <property type="chains" value="C=1-309"/>
</dbReference>
<dbReference type="PDB" id="7PKS">
    <property type="method" value="EM"/>
    <property type="resolution" value="3.60 A"/>
    <property type="chains" value="q=1-309"/>
</dbReference>
<dbReference type="PDB" id="7SOY">
    <property type="method" value="EM"/>
    <property type="resolution" value="3.40 A"/>
    <property type="chains" value="C=1-309"/>
</dbReference>
<dbReference type="PDB" id="7YCX">
    <property type="method" value="EM"/>
    <property type="resolution" value="4.18 A"/>
    <property type="chains" value="Q=1-309"/>
</dbReference>
<dbReference type="PDB" id="8RBX">
    <property type="method" value="EM"/>
    <property type="resolution" value="4.10 A"/>
    <property type="chains" value="q=1-309"/>
</dbReference>
<dbReference type="PDB" id="8RBZ">
    <property type="method" value="EM"/>
    <property type="resolution" value="3.70 A"/>
    <property type="chains" value="q=1-309"/>
</dbReference>
<dbReference type="PDB" id="8RC4">
    <property type="method" value="EM"/>
    <property type="resolution" value="3.10 A"/>
    <property type="chains" value="q=1-309"/>
</dbReference>
<dbReference type="PDB" id="8SO0">
    <property type="method" value="EM"/>
    <property type="resolution" value="2.80 A"/>
    <property type="chains" value="C=1-309"/>
</dbReference>
<dbReference type="PDB" id="8TTB">
    <property type="method" value="EM"/>
    <property type="resolution" value="2.77 A"/>
    <property type="chains" value="C=1-309"/>
</dbReference>
<dbReference type="PDB" id="8TWE">
    <property type="method" value="EM"/>
    <property type="resolution" value="2.55 A"/>
    <property type="chains" value="C=1-309"/>
</dbReference>
<dbReference type="PDB" id="8TWI">
    <property type="method" value="EM"/>
    <property type="resolution" value="2.69 A"/>
    <property type="chains" value="C=1-309"/>
</dbReference>
<dbReference type="PDB" id="8U1X">
    <property type="method" value="EM"/>
    <property type="resolution" value="2.70 A"/>
    <property type="chains" value="C=1-309"/>
</dbReference>
<dbReference type="PDB" id="8U89">
    <property type="method" value="EM"/>
    <property type="resolution" value="3.30 A"/>
    <property type="chains" value="C=1-309"/>
</dbReference>
<dbReference type="PDB" id="8UWB">
    <property type="method" value="X-ray"/>
    <property type="resolution" value="3.15 A"/>
    <property type="chains" value="A/D=1-71"/>
</dbReference>
<dbReference type="PDB" id="8YJB">
    <property type="method" value="EM"/>
    <property type="resolution" value="4.10 A"/>
    <property type="chains" value="Q=1-309"/>
</dbReference>
<dbReference type="PDBsum" id="2IAE"/>
<dbReference type="PDBsum" id="2IE3"/>
<dbReference type="PDBsum" id="2IE4"/>
<dbReference type="PDBsum" id="2NPP"/>
<dbReference type="PDBsum" id="2NYL"/>
<dbReference type="PDBsum" id="2NYM"/>
<dbReference type="PDBsum" id="3C5W"/>
<dbReference type="PDBsum" id="3DW8"/>
<dbReference type="PDBsum" id="3FGA"/>
<dbReference type="PDBsum" id="3K7V"/>
<dbReference type="PDBsum" id="3K7W"/>
<dbReference type="PDBsum" id="3P71"/>
<dbReference type="PDBsum" id="4I5L"/>
<dbReference type="PDBsum" id="4I5N"/>
<dbReference type="PDBsum" id="4IYP"/>
<dbReference type="PDBsum" id="4LAC"/>
<dbReference type="PDBsum" id="4NY3"/>
<dbReference type="PDBsum" id="5W0W"/>
<dbReference type="PDBsum" id="6NTS"/>
<dbReference type="PDBsum" id="7CUN"/>
<dbReference type="PDBsum" id="7K36"/>
<dbReference type="PDBsum" id="7PKS"/>
<dbReference type="PDBsum" id="7SOY"/>
<dbReference type="PDBsum" id="7YCX"/>
<dbReference type="PDBsum" id="8RBX"/>
<dbReference type="PDBsum" id="8RBZ"/>
<dbReference type="PDBsum" id="8RC4"/>
<dbReference type="PDBsum" id="8SO0"/>
<dbReference type="PDBsum" id="8TTB"/>
<dbReference type="PDBsum" id="8TWE"/>
<dbReference type="PDBsum" id="8TWI"/>
<dbReference type="PDBsum" id="8U1X"/>
<dbReference type="PDBsum" id="8U89"/>
<dbReference type="PDBsum" id="8UWB"/>
<dbReference type="PDBsum" id="8YJB"/>
<dbReference type="EMDB" id="EMD-0510"/>
<dbReference type="EMDB" id="EMD-13479"/>
<dbReference type="EMDB" id="EMD-19038"/>
<dbReference type="EMDB" id="EMD-19040"/>
<dbReference type="EMDB" id="EMD-19047"/>
<dbReference type="EMDB" id="EMD-22650"/>
<dbReference type="EMDB" id="EMD-25363"/>
<dbReference type="EMDB" id="EMD-30473"/>
<dbReference type="EMDB" id="EMD-33741"/>
<dbReference type="EMDB" id="EMD-39338"/>
<dbReference type="EMDB" id="EMD-40644"/>
<dbReference type="EMDB" id="EMD-41604"/>
<dbReference type="EMDB" id="EMD-41667"/>
<dbReference type="EMDB" id="EMD-41668"/>
<dbReference type="EMDB" id="EMD-41837"/>
<dbReference type="EMDB" id="EMD-42018"/>
<dbReference type="SASBDB" id="P67775"/>
<dbReference type="SMR" id="P67775"/>
<dbReference type="BioGRID" id="111507">
    <property type="interactions" value="493"/>
</dbReference>
<dbReference type="ComplexPortal" id="CPX-2236">
    <property type="entry name" value="STRIPAK complex, STRIP1-STRN3 variant"/>
</dbReference>
<dbReference type="ComplexPortal" id="CPX-8601">
    <property type="entry name" value="STRIPAK complex, STRIP2-STRN3 variant"/>
</dbReference>
<dbReference type="ComplexPortal" id="CPX-8604">
    <property type="entry name" value="STRIPAK complex, STRIP1-STRN variant"/>
</dbReference>
<dbReference type="ComplexPortal" id="CPX-8605">
    <property type="entry name" value="STRIPAK complex, STRIP2-STRN variant"/>
</dbReference>
<dbReference type="ComplexPortal" id="CPX-8606">
    <property type="entry name" value="STRIPAK complex, STRIP1-STRN4 variant"/>
</dbReference>
<dbReference type="ComplexPortal" id="CPX-8607">
    <property type="entry name" value="STRIPAK complex, STRIP2-STRN4 variant"/>
</dbReference>
<dbReference type="CORUM" id="P67775"/>
<dbReference type="DIP" id="DIP-29395N"/>
<dbReference type="FunCoup" id="P67775">
    <property type="interactions" value="4108"/>
</dbReference>
<dbReference type="IntAct" id="P67775">
    <property type="interactions" value="289"/>
</dbReference>
<dbReference type="MINT" id="P67775"/>
<dbReference type="STRING" id="9606.ENSP00000418447"/>
<dbReference type="BindingDB" id="P67775"/>
<dbReference type="ChEMBL" id="CHEMBL4703"/>
<dbReference type="DrugBank" id="DB06905">
    <property type="generic name" value="(2S,3S,4E,6E,8S,9S)-3-amino-9-methoxy-2,6,8-trimethyl-10-phenyldeca-4,6-dienoic acid"/>
</dbReference>
<dbReference type="DrugBank" id="DB02506">
    <property type="generic name" value="2,6,8-Trimethyl-3-Amino-9-Benzyl-9-Methoxynonanoic Acid"/>
</dbReference>
<dbReference type="DrugBank" id="DB00163">
    <property type="generic name" value="Vitamin E"/>
</dbReference>
<dbReference type="GuidetoPHARMACOLOGY" id="3263"/>
<dbReference type="DEPOD" id="PPP2CA"/>
<dbReference type="GlyGen" id="P67775">
    <property type="glycosylation" value="1 site, 1 O-linked glycan (1 site)"/>
</dbReference>
<dbReference type="iPTMnet" id="P67775"/>
<dbReference type="PhosphoSitePlus" id="P67775"/>
<dbReference type="SwissPalm" id="P67775"/>
<dbReference type="BioMuta" id="PPP2CA"/>
<dbReference type="DMDM" id="54038809"/>
<dbReference type="jPOST" id="P67775"/>
<dbReference type="MassIVE" id="P67775"/>
<dbReference type="PaxDb" id="9606-ENSP00000418447"/>
<dbReference type="PeptideAtlas" id="P67775"/>
<dbReference type="PRIDE" id="P67775"/>
<dbReference type="ProteomicsDB" id="57521">
    <molecule id="P67775-1"/>
</dbReference>
<dbReference type="Pumba" id="P67775"/>
<dbReference type="Antibodypedia" id="3550">
    <property type="antibodies" value="671 antibodies from 45 providers"/>
</dbReference>
<dbReference type="DNASU" id="5515"/>
<dbReference type="Ensembl" id="ENST00000481195.6">
    <molecule id="P67775-1"/>
    <property type="protein sequence ID" value="ENSP00000418447.1"/>
    <property type="gene ID" value="ENSG00000113575.13"/>
</dbReference>
<dbReference type="GeneID" id="5515"/>
<dbReference type="KEGG" id="hsa:5515"/>
<dbReference type="MANE-Select" id="ENST00000481195.6">
    <property type="protein sequence ID" value="ENSP00000418447.1"/>
    <property type="RefSeq nucleotide sequence ID" value="NM_002715.4"/>
    <property type="RefSeq protein sequence ID" value="NP_002706.1"/>
</dbReference>
<dbReference type="UCSC" id="uc003kze.4">
    <molecule id="P67775-1"/>
    <property type="organism name" value="human"/>
</dbReference>
<dbReference type="AGR" id="HGNC:9299"/>
<dbReference type="CTD" id="5515"/>
<dbReference type="DisGeNET" id="5515"/>
<dbReference type="GeneCards" id="PPP2CA"/>
<dbReference type="HGNC" id="HGNC:9299">
    <property type="gene designation" value="PPP2CA"/>
</dbReference>
<dbReference type="HPA" id="ENSG00000113575">
    <property type="expression patterns" value="Low tissue specificity"/>
</dbReference>
<dbReference type="MalaCards" id="PPP2CA"/>
<dbReference type="MIM" id="176915">
    <property type="type" value="gene"/>
</dbReference>
<dbReference type="MIM" id="618354">
    <property type="type" value="phenotype"/>
</dbReference>
<dbReference type="neXtProt" id="NX_P67775"/>
<dbReference type="OpenTargets" id="ENSG00000113575"/>
<dbReference type="Orphanet" id="528084">
    <property type="disease" value="Non-specific syndromic intellectual disability"/>
</dbReference>
<dbReference type="PharmGKB" id="PA33663"/>
<dbReference type="VEuPathDB" id="HostDB:ENSG00000113575"/>
<dbReference type="eggNOG" id="KOG0371">
    <property type="taxonomic scope" value="Eukaryota"/>
</dbReference>
<dbReference type="GeneTree" id="ENSGT00550000074618"/>
<dbReference type="HOGENOM" id="CLU_004962_0_5_1"/>
<dbReference type="InParanoid" id="P67775"/>
<dbReference type="OMA" id="CMKVRYP"/>
<dbReference type="OrthoDB" id="1930084at2759"/>
<dbReference type="PAN-GO" id="P67775">
    <property type="GO annotations" value="3 GO annotations based on evolutionary models"/>
</dbReference>
<dbReference type="PhylomeDB" id="P67775"/>
<dbReference type="TreeFam" id="TF105559"/>
<dbReference type="BioCyc" id="MetaCyc:HS03696-MONOMER"/>
<dbReference type="BRENDA" id="3.1.3.16">
    <property type="organism ID" value="2681"/>
</dbReference>
<dbReference type="PathwayCommons" id="P67775"/>
<dbReference type="Reactome" id="R-HSA-113501">
    <property type="pathway name" value="Inhibition of replication initiation of damaged DNA by RB1/E2F1"/>
</dbReference>
<dbReference type="Reactome" id="R-HSA-1295596">
    <property type="pathway name" value="Spry regulation of FGF signaling"/>
</dbReference>
<dbReference type="Reactome" id="R-HSA-141444">
    <property type="pathway name" value="Amplification of signal from unattached kinetochores via a MAD2 inhibitory signal"/>
</dbReference>
<dbReference type="Reactome" id="R-HSA-163685">
    <property type="pathway name" value="Integration of energy metabolism"/>
</dbReference>
<dbReference type="Reactome" id="R-HSA-163767">
    <property type="pathway name" value="PP2A-mediated dephosphorylation of key metabolic factors"/>
</dbReference>
<dbReference type="Reactome" id="R-HSA-180024">
    <property type="pathway name" value="DARPP-32 events"/>
</dbReference>
<dbReference type="Reactome" id="R-HSA-195253">
    <property type="pathway name" value="Degradation of beta-catenin by the destruction complex"/>
</dbReference>
<dbReference type="Reactome" id="R-HSA-196299">
    <property type="pathway name" value="Beta-catenin phosphorylation cascade"/>
</dbReference>
<dbReference type="Reactome" id="R-HSA-198753">
    <property type="pathway name" value="ERK/MAPK targets"/>
</dbReference>
<dbReference type="Reactome" id="R-HSA-202670">
    <property type="pathway name" value="ERKs are inactivated"/>
</dbReference>
<dbReference type="Reactome" id="R-HSA-2465910">
    <property type="pathway name" value="MASTL Facilitates Mitotic Progression"/>
</dbReference>
<dbReference type="Reactome" id="R-HSA-2467813">
    <property type="pathway name" value="Separation of Sister Chromatids"/>
</dbReference>
<dbReference type="Reactome" id="R-HSA-2500257">
    <property type="pathway name" value="Resolution of Sister Chromatid Cohesion"/>
</dbReference>
<dbReference type="Reactome" id="R-HSA-2995383">
    <property type="pathway name" value="Initiation of Nuclear Envelope (NE) Reformation"/>
</dbReference>
<dbReference type="Reactome" id="R-HSA-389356">
    <property type="pathway name" value="Co-stimulation by CD28"/>
</dbReference>
<dbReference type="Reactome" id="R-HSA-389513">
    <property type="pathway name" value="Co-inhibition by CTLA4"/>
</dbReference>
<dbReference type="Reactome" id="R-HSA-432142">
    <property type="pathway name" value="Platelet sensitization by LDL"/>
</dbReference>
<dbReference type="Reactome" id="R-HSA-4641262">
    <property type="pathway name" value="Disassembly of the destruction complex and recruitment of AXIN to the membrane"/>
</dbReference>
<dbReference type="Reactome" id="R-HSA-5339716">
    <property type="pathway name" value="Signaling by GSK3beta mutants"/>
</dbReference>
<dbReference type="Reactome" id="R-HSA-5358747">
    <property type="pathway name" value="CTNNB1 S33 mutants aren't phosphorylated"/>
</dbReference>
<dbReference type="Reactome" id="R-HSA-5358749">
    <property type="pathway name" value="CTNNB1 S37 mutants aren't phosphorylated"/>
</dbReference>
<dbReference type="Reactome" id="R-HSA-5358751">
    <property type="pathway name" value="CTNNB1 S45 mutants aren't phosphorylated"/>
</dbReference>
<dbReference type="Reactome" id="R-HSA-5358752">
    <property type="pathway name" value="CTNNB1 T41 mutants aren't phosphorylated"/>
</dbReference>
<dbReference type="Reactome" id="R-HSA-5467337">
    <property type="pathway name" value="APC truncation mutants have impaired AXIN binding"/>
</dbReference>
<dbReference type="Reactome" id="R-HSA-5467340">
    <property type="pathway name" value="AXIN missense mutants destabilize the destruction complex"/>
</dbReference>
<dbReference type="Reactome" id="R-HSA-5467348">
    <property type="pathway name" value="Truncations of AMER1 destabilize the destruction complex"/>
</dbReference>
<dbReference type="Reactome" id="R-HSA-5663220">
    <property type="pathway name" value="RHO GTPases Activate Formins"/>
</dbReference>
<dbReference type="Reactome" id="R-HSA-5673000">
    <property type="pathway name" value="RAF activation"/>
</dbReference>
<dbReference type="Reactome" id="R-HSA-5675221">
    <property type="pathway name" value="Negative regulation of MAPK pathway"/>
</dbReference>
<dbReference type="Reactome" id="R-HSA-6804757">
    <property type="pathway name" value="Regulation of TP53 Degradation"/>
</dbReference>
<dbReference type="Reactome" id="R-HSA-6811558">
    <property type="pathway name" value="PI5P, PP2A and IER3 Regulate PI3K/AKT Signaling"/>
</dbReference>
<dbReference type="Reactome" id="R-HSA-68877">
    <property type="pathway name" value="Mitotic Prometaphase"/>
</dbReference>
<dbReference type="Reactome" id="R-HSA-69231">
    <property type="pathway name" value="Cyclin D associated events in G1"/>
</dbReference>
<dbReference type="Reactome" id="R-HSA-69273">
    <property type="pathway name" value="Cyclin A/B1/B2 associated events during G2/M transition"/>
</dbReference>
<dbReference type="Reactome" id="R-HSA-9634600">
    <property type="pathway name" value="Regulation of glycolysis by fructose 2,6-bisphosphate metabolism"/>
</dbReference>
<dbReference type="Reactome" id="R-HSA-9648025">
    <property type="pathway name" value="EML4 and NUDC in mitotic spindle formation"/>
</dbReference>
<dbReference type="Reactome" id="R-HSA-975957">
    <property type="pathway name" value="Nonsense Mediated Decay (NMD) enhanced by the Exon Junction Complex (EJC)"/>
</dbReference>
<dbReference type="Reactome" id="R-HSA-9833482">
    <property type="pathway name" value="PKR-mediated signaling"/>
</dbReference>
<dbReference type="Reactome" id="R-HSA-9860927">
    <property type="pathway name" value="Turbulent (oscillatory, disturbed) flow shear stress activates signaling by PIEZO1 and integrins in endothelial cells"/>
</dbReference>
<dbReference type="SignaLink" id="P67775"/>
<dbReference type="SIGNOR" id="P67775"/>
<dbReference type="BioGRID-ORCS" id="5515">
    <property type="hits" value="629 hits in 1197 CRISPR screens"/>
</dbReference>
<dbReference type="ChiTaRS" id="PPP2CA">
    <property type="organism name" value="human"/>
</dbReference>
<dbReference type="EvolutionaryTrace" id="P67775"/>
<dbReference type="GeneWiki" id="PPP2CA"/>
<dbReference type="GenomeRNAi" id="5515"/>
<dbReference type="Pharos" id="P67775">
    <property type="development level" value="Tchem"/>
</dbReference>
<dbReference type="PRO" id="PR:P67775"/>
<dbReference type="Proteomes" id="UP000005640">
    <property type="component" value="Chromosome 5"/>
</dbReference>
<dbReference type="RNAct" id="P67775">
    <property type="molecule type" value="protein"/>
</dbReference>
<dbReference type="Bgee" id="ENSG00000113575">
    <property type="expression patterns" value="Expressed in lateral nuclear group of thalamus and 209 other cell types or tissues"/>
</dbReference>
<dbReference type="ExpressionAtlas" id="P67775">
    <property type="expression patterns" value="baseline and differential"/>
</dbReference>
<dbReference type="GO" id="GO:0000785">
    <property type="term" value="C:chromatin"/>
    <property type="evidence" value="ECO:0000314"/>
    <property type="project" value="UniProtKB"/>
</dbReference>
<dbReference type="GO" id="GO:0000775">
    <property type="term" value="C:chromosome, centromeric region"/>
    <property type="evidence" value="ECO:0007669"/>
    <property type="project" value="UniProtKB-SubCell"/>
</dbReference>
<dbReference type="GO" id="GO:0005829">
    <property type="term" value="C:cytosol"/>
    <property type="evidence" value="ECO:0000314"/>
    <property type="project" value="FlyBase"/>
</dbReference>
<dbReference type="GO" id="GO:0070062">
    <property type="term" value="C:extracellular exosome"/>
    <property type="evidence" value="ECO:0007005"/>
    <property type="project" value="UniProtKB"/>
</dbReference>
<dbReference type="GO" id="GO:0090443">
    <property type="term" value="C:FAR/SIN/STRIPAK complex"/>
    <property type="evidence" value="ECO:0000314"/>
    <property type="project" value="UniProtKB"/>
</dbReference>
<dbReference type="GO" id="GO:0160232">
    <property type="term" value="C:INTAC complex"/>
    <property type="evidence" value="ECO:0000314"/>
    <property type="project" value="UniProtKB"/>
</dbReference>
<dbReference type="GO" id="GO:0016020">
    <property type="term" value="C:membrane"/>
    <property type="evidence" value="ECO:0000303"/>
    <property type="project" value="UniProtKB"/>
</dbReference>
<dbReference type="GO" id="GO:0045121">
    <property type="term" value="C:membrane raft"/>
    <property type="evidence" value="ECO:0000314"/>
    <property type="project" value="UniProtKB"/>
</dbReference>
<dbReference type="GO" id="GO:0015630">
    <property type="term" value="C:microtubule cytoskeleton"/>
    <property type="evidence" value="ECO:0000303"/>
    <property type="project" value="UniProtKB"/>
</dbReference>
<dbReference type="GO" id="GO:0005739">
    <property type="term" value="C:mitochondrion"/>
    <property type="evidence" value="ECO:0000303"/>
    <property type="project" value="UniProtKB"/>
</dbReference>
<dbReference type="GO" id="GO:0005634">
    <property type="term" value="C:nucleus"/>
    <property type="evidence" value="ECO:0000314"/>
    <property type="project" value="UniProtKB"/>
</dbReference>
<dbReference type="GO" id="GO:0005886">
    <property type="term" value="C:plasma membrane"/>
    <property type="evidence" value="ECO:0007669"/>
    <property type="project" value="Ensembl"/>
</dbReference>
<dbReference type="GO" id="GO:0000159">
    <property type="term" value="C:protein phosphatase type 2A complex"/>
    <property type="evidence" value="ECO:0000314"/>
    <property type="project" value="UniProtKB"/>
</dbReference>
<dbReference type="GO" id="GO:0008287">
    <property type="term" value="C:protein serine/threonine phosphatase complex"/>
    <property type="evidence" value="ECO:0000314"/>
    <property type="project" value="UniProt"/>
</dbReference>
<dbReference type="GO" id="GO:0000922">
    <property type="term" value="C:spindle pole"/>
    <property type="evidence" value="ECO:0007669"/>
    <property type="project" value="UniProtKB-SubCell"/>
</dbReference>
<dbReference type="GO" id="GO:0045202">
    <property type="term" value="C:synapse"/>
    <property type="evidence" value="ECO:0007669"/>
    <property type="project" value="Ensembl"/>
</dbReference>
<dbReference type="GO" id="GO:0050811">
    <property type="term" value="F:GABA receptor binding"/>
    <property type="evidence" value="ECO:0007669"/>
    <property type="project" value="Ensembl"/>
</dbReference>
<dbReference type="GO" id="GO:0046872">
    <property type="term" value="F:metal ion binding"/>
    <property type="evidence" value="ECO:0007669"/>
    <property type="project" value="UniProtKB-KW"/>
</dbReference>
<dbReference type="GO" id="GO:0004721">
    <property type="term" value="F:phosphoprotein phosphatase activity"/>
    <property type="evidence" value="ECO:0000304"/>
    <property type="project" value="ARUK-UCL"/>
</dbReference>
<dbReference type="GO" id="GO:0046982">
    <property type="term" value="F:protein heterodimerization activity"/>
    <property type="evidence" value="ECO:0000353"/>
    <property type="project" value="UniProtKB"/>
</dbReference>
<dbReference type="GO" id="GO:0004722">
    <property type="term" value="F:protein serine/threonine phosphatase activity"/>
    <property type="evidence" value="ECO:0000314"/>
    <property type="project" value="UniProtKB"/>
</dbReference>
<dbReference type="GO" id="GO:0004725">
    <property type="term" value="F:protein tyrosine phosphatase activity"/>
    <property type="evidence" value="ECO:0000314"/>
    <property type="project" value="UniProtKB"/>
</dbReference>
<dbReference type="GO" id="GO:0180006">
    <property type="term" value="F:RNA polymerase II CTD heptapeptide repeat S2 phosphatase activity"/>
    <property type="evidence" value="ECO:0000314"/>
    <property type="project" value="UniProtKB"/>
</dbReference>
<dbReference type="GO" id="GO:0180007">
    <property type="term" value="F:RNA polymerase II CTD heptapeptide repeat S5 phosphatase activity"/>
    <property type="evidence" value="ECO:0000314"/>
    <property type="project" value="UniProtKB"/>
</dbReference>
<dbReference type="GO" id="GO:0180008">
    <property type="term" value="F:RNA polymerase II CTD heptapeptide repeat S7 phosphatase activity"/>
    <property type="evidence" value="ECO:0000314"/>
    <property type="project" value="UniProtKB"/>
</dbReference>
<dbReference type="GO" id="GO:0048156">
    <property type="term" value="F:tau protein binding"/>
    <property type="evidence" value="ECO:0000303"/>
    <property type="project" value="ARUK-UCL"/>
</dbReference>
<dbReference type="GO" id="GO:0035556">
    <property type="term" value="P:intracellular signal transduction"/>
    <property type="evidence" value="ECO:0000303"/>
    <property type="project" value="UniProtKB"/>
</dbReference>
<dbReference type="GO" id="GO:0051321">
    <property type="term" value="P:meiotic cell cycle"/>
    <property type="evidence" value="ECO:0007669"/>
    <property type="project" value="UniProtKB-KW"/>
</dbReference>
<dbReference type="GO" id="GO:0007498">
    <property type="term" value="P:mesoderm development"/>
    <property type="evidence" value="ECO:0007669"/>
    <property type="project" value="Ensembl"/>
</dbReference>
<dbReference type="GO" id="GO:0000278">
    <property type="term" value="P:mitotic cell cycle"/>
    <property type="evidence" value="ECO:0000318"/>
    <property type="project" value="GO_Central"/>
</dbReference>
<dbReference type="GO" id="GO:0090090">
    <property type="term" value="P:negative regulation of canonical Wnt signaling pathway"/>
    <property type="evidence" value="ECO:0000315"/>
    <property type="project" value="BHF-UCL"/>
</dbReference>
<dbReference type="GO" id="GO:0010719">
    <property type="term" value="P:negative regulation of epithelial to mesenchymal transition"/>
    <property type="evidence" value="ECO:0000315"/>
    <property type="project" value="BHF-UCL"/>
</dbReference>
<dbReference type="GO" id="GO:1904539">
    <property type="term" value="P:negative regulation of glycolytic process through fructose-6-phosphate"/>
    <property type="evidence" value="ECO:0007669"/>
    <property type="project" value="Ensembl"/>
</dbReference>
<dbReference type="GO" id="GO:0035331">
    <property type="term" value="P:negative regulation of hippo signaling"/>
    <property type="evidence" value="ECO:0000314"/>
    <property type="project" value="UniProtKB"/>
</dbReference>
<dbReference type="GO" id="GO:0051898">
    <property type="term" value="P:negative regulation of phosphatidylinositol 3-kinase/protein kinase B signal transduction"/>
    <property type="evidence" value="ECO:0000315"/>
    <property type="project" value="ARUK-UCL"/>
</dbReference>
<dbReference type="GO" id="GO:0035970">
    <property type="term" value="P:peptidyl-threonine dephosphorylation"/>
    <property type="evidence" value="ECO:0000314"/>
    <property type="project" value="UniProtKB"/>
</dbReference>
<dbReference type="GO" id="GO:1900227">
    <property type="term" value="P:positive regulation of NLRP3 inflammasome complex assembly"/>
    <property type="evidence" value="ECO:0000250"/>
    <property type="project" value="UniProtKB"/>
</dbReference>
<dbReference type="GO" id="GO:0006470">
    <property type="term" value="P:protein dephosphorylation"/>
    <property type="evidence" value="ECO:0000315"/>
    <property type="project" value="UniProtKB"/>
</dbReference>
<dbReference type="GO" id="GO:0045595">
    <property type="term" value="P:regulation of cell differentiation"/>
    <property type="evidence" value="ECO:0000303"/>
    <property type="project" value="UniProtKB"/>
</dbReference>
<dbReference type="GO" id="GO:2000045">
    <property type="term" value="P:regulation of G1/S transition of mitotic cell cycle"/>
    <property type="evidence" value="ECO:0000314"/>
    <property type="project" value="UniProtKB"/>
</dbReference>
<dbReference type="GO" id="GO:0040008">
    <property type="term" value="P:regulation of growth"/>
    <property type="evidence" value="ECO:0000303"/>
    <property type="project" value="UniProtKB"/>
</dbReference>
<dbReference type="GO" id="GO:0031113">
    <property type="term" value="P:regulation of microtubule polymerization"/>
    <property type="evidence" value="ECO:0000250"/>
    <property type="project" value="ARUK-UCL"/>
</dbReference>
<dbReference type="GO" id="GO:0010288">
    <property type="term" value="P:response to lead ion"/>
    <property type="evidence" value="ECO:0000250"/>
    <property type="project" value="ARUK-UCL"/>
</dbReference>
<dbReference type="GO" id="GO:0160240">
    <property type="term" value="P:RNA polymerase II transcription initiation surveillance"/>
    <property type="evidence" value="ECO:0000314"/>
    <property type="project" value="UniProtKB"/>
</dbReference>
<dbReference type="GO" id="GO:0043029">
    <property type="term" value="P:T cell homeostasis"/>
    <property type="evidence" value="ECO:0000250"/>
    <property type="project" value="UniProtKB"/>
</dbReference>
<dbReference type="GO" id="GO:0097706">
    <property type="term" value="P:vascular endothelial cell response to oscillatory fluid shear stress"/>
    <property type="evidence" value="ECO:0000304"/>
    <property type="project" value="Reactome"/>
</dbReference>
<dbReference type="CDD" id="cd07415">
    <property type="entry name" value="MPP_PP2A_PP4_PP6"/>
    <property type="match status" value="1"/>
</dbReference>
<dbReference type="FunFam" id="3.60.21.10:FF:000003">
    <property type="entry name" value="Serine/threonine-protein phosphatase"/>
    <property type="match status" value="1"/>
</dbReference>
<dbReference type="Gene3D" id="3.60.21.10">
    <property type="match status" value="1"/>
</dbReference>
<dbReference type="InterPro" id="IPR004843">
    <property type="entry name" value="Calcineurin-like_PHP_ApaH"/>
</dbReference>
<dbReference type="InterPro" id="IPR029052">
    <property type="entry name" value="Metallo-depent_PP-like"/>
</dbReference>
<dbReference type="InterPro" id="IPR047129">
    <property type="entry name" value="PPA2-like"/>
</dbReference>
<dbReference type="InterPro" id="IPR006186">
    <property type="entry name" value="Ser/Thr-sp_prot-phosphatase"/>
</dbReference>
<dbReference type="PANTHER" id="PTHR45619">
    <property type="entry name" value="SERINE/THREONINE-PROTEIN PHOSPHATASE PP2A-RELATED"/>
    <property type="match status" value="1"/>
</dbReference>
<dbReference type="Pfam" id="PF00149">
    <property type="entry name" value="Metallophos"/>
    <property type="match status" value="1"/>
</dbReference>
<dbReference type="PRINTS" id="PR00114">
    <property type="entry name" value="STPHPHTASE"/>
</dbReference>
<dbReference type="SMART" id="SM00156">
    <property type="entry name" value="PP2Ac"/>
    <property type="match status" value="1"/>
</dbReference>
<dbReference type="SUPFAM" id="SSF56300">
    <property type="entry name" value="Metallo-dependent phosphatases"/>
    <property type="match status" value="1"/>
</dbReference>
<dbReference type="PROSITE" id="PS00125">
    <property type="entry name" value="SER_THR_PHOSPHATASE"/>
    <property type="match status" value="1"/>
</dbReference>
<proteinExistence type="evidence at protein level"/>
<evidence type="ECO:0000250" key="1">
    <source>
        <dbReference type="UniProtKB" id="P36873"/>
    </source>
</evidence>
<evidence type="ECO:0000250" key="2">
    <source>
        <dbReference type="UniProtKB" id="P63330"/>
    </source>
</evidence>
<evidence type="ECO:0000250" key="3">
    <source>
        <dbReference type="UniProtKB" id="P67774"/>
    </source>
</evidence>
<evidence type="ECO:0000269" key="4">
    <source>
    </source>
</evidence>
<evidence type="ECO:0000269" key="5">
    <source>
    </source>
</evidence>
<evidence type="ECO:0000269" key="6">
    <source>
    </source>
</evidence>
<evidence type="ECO:0000269" key="7">
    <source>
    </source>
</evidence>
<evidence type="ECO:0000269" key="8">
    <source>
    </source>
</evidence>
<evidence type="ECO:0000269" key="9">
    <source>
    </source>
</evidence>
<evidence type="ECO:0000269" key="10">
    <source>
    </source>
</evidence>
<evidence type="ECO:0000269" key="11">
    <source>
    </source>
</evidence>
<evidence type="ECO:0000269" key="12">
    <source>
    </source>
</evidence>
<evidence type="ECO:0000269" key="13">
    <source>
    </source>
</evidence>
<evidence type="ECO:0000269" key="14">
    <source>
    </source>
</evidence>
<evidence type="ECO:0000269" key="15">
    <source>
    </source>
</evidence>
<evidence type="ECO:0000269" key="16">
    <source>
    </source>
</evidence>
<evidence type="ECO:0000269" key="17">
    <source>
    </source>
</evidence>
<evidence type="ECO:0000269" key="18">
    <source>
    </source>
</evidence>
<evidence type="ECO:0000269" key="19">
    <source>
    </source>
</evidence>
<evidence type="ECO:0000269" key="20">
    <source>
    </source>
</evidence>
<evidence type="ECO:0000269" key="21">
    <source>
    </source>
</evidence>
<evidence type="ECO:0000269" key="22">
    <source>
    </source>
</evidence>
<evidence type="ECO:0000269" key="23">
    <source>
    </source>
</evidence>
<evidence type="ECO:0000269" key="24">
    <source>
    </source>
</evidence>
<evidence type="ECO:0000269" key="25">
    <source>
    </source>
</evidence>
<evidence type="ECO:0000269" key="26">
    <source>
    </source>
</evidence>
<evidence type="ECO:0000269" key="27">
    <source>
    </source>
</evidence>
<evidence type="ECO:0000269" key="28">
    <source>
    </source>
</evidence>
<evidence type="ECO:0000269" key="29">
    <source>
    </source>
</evidence>
<evidence type="ECO:0000269" key="30">
    <source>
    </source>
</evidence>
<evidence type="ECO:0000269" key="31">
    <source>
    </source>
</evidence>
<evidence type="ECO:0000269" key="32">
    <source>
    </source>
</evidence>
<evidence type="ECO:0000269" key="33">
    <source>
    </source>
</evidence>
<evidence type="ECO:0000269" key="34">
    <source>
    </source>
</evidence>
<evidence type="ECO:0000269" key="35">
    <source>
    </source>
</evidence>
<evidence type="ECO:0000269" key="36">
    <source>
    </source>
</evidence>
<evidence type="ECO:0000269" key="37">
    <source>
    </source>
</evidence>
<evidence type="ECO:0000269" key="38">
    <source>
    </source>
</evidence>
<evidence type="ECO:0000269" key="39">
    <source>
    </source>
</evidence>
<evidence type="ECO:0000269" key="40">
    <source>
    </source>
</evidence>
<evidence type="ECO:0000269" key="41">
    <source>
    </source>
</evidence>
<evidence type="ECO:0000269" key="42">
    <source>
    </source>
</evidence>
<evidence type="ECO:0000305" key="43"/>
<evidence type="ECO:0007744" key="44">
    <source>
        <dbReference type="PDB" id="4NY3"/>
    </source>
</evidence>
<evidence type="ECO:0007744" key="45">
    <source>
        <dbReference type="PDB" id="7CUN"/>
    </source>
</evidence>
<evidence type="ECO:0007744" key="46">
    <source>
        <dbReference type="PDB" id="7K36"/>
    </source>
</evidence>
<evidence type="ECO:0007744" key="47">
    <source>
        <dbReference type="PDB" id="7PKS"/>
    </source>
</evidence>
<evidence type="ECO:0007744" key="48">
    <source>
        <dbReference type="PDB" id="7YCX"/>
    </source>
</evidence>
<evidence type="ECO:0007744" key="49">
    <source>
        <dbReference type="PDB" id="8RBX"/>
    </source>
</evidence>
<evidence type="ECO:0007744" key="50">
    <source>
        <dbReference type="PDB" id="8RBZ"/>
    </source>
</evidence>
<evidence type="ECO:0007744" key="51">
    <source>
        <dbReference type="PDB" id="8RC4"/>
    </source>
</evidence>
<evidence type="ECO:0007744" key="52">
    <source>
        <dbReference type="PDB" id="8SO0"/>
    </source>
</evidence>
<evidence type="ECO:0007744" key="53">
    <source>
        <dbReference type="PDB" id="8TTB"/>
    </source>
</evidence>
<evidence type="ECO:0007744" key="54">
    <source>
        <dbReference type="PDB" id="8TWE"/>
    </source>
</evidence>
<evidence type="ECO:0007744" key="55">
    <source>
        <dbReference type="PDB" id="8TWI"/>
    </source>
</evidence>
<evidence type="ECO:0007829" key="56">
    <source>
        <dbReference type="PDB" id="4I5L"/>
    </source>
</evidence>
<evidence type="ECO:0007829" key="57">
    <source>
        <dbReference type="PDB" id="7K36"/>
    </source>
</evidence>
<evidence type="ECO:0007829" key="58">
    <source>
        <dbReference type="PDB" id="8TWE"/>
    </source>
</evidence>
<evidence type="ECO:0007829" key="59">
    <source>
        <dbReference type="PDB" id="8TWI"/>
    </source>
</evidence>